<name>RL16_ECOLI</name>
<reference key="1">
    <citation type="journal article" date="1976" name="FEBS Lett.">
        <title>The primary structure of protein L16 located at the peptidyltransferase center of Escherichia coli ribosomes.</title>
        <authorList>
            <person name="Brosius J."/>
            <person name="Chen R."/>
        </authorList>
    </citation>
    <scope>PROTEIN SEQUENCE</scope>
    <scope>SUBUNIT</scope>
    <scope>METHYLATION AT MET-1</scope>
    <source>
        <strain>K</strain>
    </source>
</reference>
<reference key="2">
    <citation type="journal article" date="1985" name="Nucleic Acids Res.">
        <title>Structure of the Escherichia coli S10 ribosomal protein operon.</title>
        <authorList>
            <person name="Zurawski G."/>
            <person name="Zurawski S.M."/>
        </authorList>
    </citation>
    <scope>NUCLEOTIDE SEQUENCE [GENOMIC DNA]</scope>
</reference>
<reference key="3">
    <citation type="journal article" date="1997" name="Science">
        <title>The complete genome sequence of Escherichia coli K-12.</title>
        <authorList>
            <person name="Blattner F.R."/>
            <person name="Plunkett G. III"/>
            <person name="Bloch C.A."/>
            <person name="Perna N.T."/>
            <person name="Burland V."/>
            <person name="Riley M."/>
            <person name="Collado-Vides J."/>
            <person name="Glasner J.D."/>
            <person name="Rode C.K."/>
            <person name="Mayhew G.F."/>
            <person name="Gregor J."/>
            <person name="Davis N.W."/>
            <person name="Kirkpatrick H.A."/>
            <person name="Goeden M.A."/>
            <person name="Rose D.J."/>
            <person name="Mau B."/>
            <person name="Shao Y."/>
        </authorList>
    </citation>
    <scope>NUCLEOTIDE SEQUENCE [LARGE SCALE GENOMIC DNA]</scope>
    <source>
        <strain>K12 / MG1655 / ATCC 47076</strain>
    </source>
</reference>
<reference key="4">
    <citation type="journal article" date="2006" name="Mol. Syst. Biol.">
        <title>Highly accurate genome sequences of Escherichia coli K-12 strains MG1655 and W3110.</title>
        <authorList>
            <person name="Hayashi K."/>
            <person name="Morooka N."/>
            <person name="Yamamoto Y."/>
            <person name="Fujita K."/>
            <person name="Isono K."/>
            <person name="Choi S."/>
            <person name="Ohtsubo E."/>
            <person name="Baba T."/>
            <person name="Wanner B.L."/>
            <person name="Mori H."/>
            <person name="Horiuchi T."/>
        </authorList>
    </citation>
    <scope>NUCLEOTIDE SEQUENCE [LARGE SCALE GENOMIC DNA]</scope>
    <source>
        <strain>K12 / W3110 / ATCC 27325 / DSM 5911</strain>
    </source>
</reference>
<reference key="5">
    <citation type="journal article" date="1980" name="J. Biol. Chem.">
        <title>DNA sequence of the promoter region for the alpha ribosomal protein operon in Escherichia coli.</title>
        <authorList>
            <person name="Post L.E."/>
            <person name="Arfsten A.E."/>
            <person name="Davis G.R."/>
            <person name="Nomura M."/>
        </authorList>
    </citation>
    <scope>NUCLEOTIDE SEQUENCE [GENOMIC DNA] OF 65-80</scope>
</reference>
<reference key="6">
    <citation type="journal article" date="1987" name="J. Biol. Chem.">
        <title>Incorporation of six additional proteins to complete the assembly map of the 50 S subunit from Escherichia coli ribosomes.</title>
        <authorList>
            <person name="Herold M."/>
            <person name="Nierhaus K.H."/>
        </authorList>
    </citation>
    <scope>ASSEMBLY MAP OF THE 50S SUBUNIT</scope>
    <source>
        <strain>K12</strain>
    </source>
</reference>
<reference key="7">
    <citation type="journal article" date="1995" name="Nucleic Acids Res.">
        <title>The ribosomal neighbourhood of the central fold of tRNA: cross-links from position 47 of tRNA located at the A, P or E site.</title>
        <authorList>
            <person name="Osswald M."/>
            <person name="Doering T."/>
            <person name="Brimacombe R."/>
        </authorList>
    </citation>
    <scope>CROSS-LINKING TO THE TRNA CENTRAL FOLD</scope>
    <source>
        <strain>MRE-600</strain>
    </source>
</reference>
<reference key="8">
    <citation type="journal article" date="1999" name="Anal. Biochem.">
        <title>Observation of Escherichia coli ribosomal proteins and their posttranslational modifications by mass spectrometry.</title>
        <authorList>
            <person name="Arnold R.J."/>
            <person name="Reilly J.P."/>
        </authorList>
    </citation>
    <scope>MASS SPECTROMETRY</scope>
    <scope>SUBUNIT</scope>
    <source>
        <strain>K12 / ATCC 25404 / DSM 5698 / NCIMB 11290</strain>
    </source>
</reference>
<reference key="9">
    <citation type="journal article" date="2012" name="Nat. Chem. Biol.">
        <title>Oxygenase-catalyzed ribosome hydroxylation occurs in prokaryotes and humans.</title>
        <authorList>
            <person name="Ge W."/>
            <person name="Wolf A."/>
            <person name="Feng T."/>
            <person name="Ho C.H."/>
            <person name="Sekirnik R."/>
            <person name="Zayer A."/>
            <person name="Granatino N."/>
            <person name="Cockman M.E."/>
            <person name="Loenarz C."/>
            <person name="Loik N.D."/>
            <person name="Hardy A.P."/>
            <person name="Claridge T.D."/>
            <person name="Hamed R.B."/>
            <person name="Chowdhury R."/>
            <person name="Gong L."/>
            <person name="Robinson C.V."/>
            <person name="Trudgian D.C."/>
            <person name="Jiang M."/>
            <person name="Mackeen M.M."/>
            <person name="McCullagh J.S."/>
            <person name="Gordiyenko Y."/>
            <person name="Thalhammer A."/>
            <person name="Yamamoto A."/>
            <person name="Yang M."/>
            <person name="Liu-Yi P."/>
            <person name="Zhang Z."/>
            <person name="Schmidt-Zachmann M."/>
            <person name="Kessler B.M."/>
            <person name="Ratcliffe P.J."/>
            <person name="Preston G.M."/>
            <person name="Coleman M.L."/>
            <person name="Schofield C.J."/>
        </authorList>
    </citation>
    <scope>HYDROXYLATION AT ARG-81 BY ROXA</scope>
    <source>
        <strain>K12</strain>
    </source>
</reference>
<reference key="10">
    <citation type="journal article" date="2014" name="Curr. Opin. Struct. Biol.">
        <title>A new system for naming ribosomal proteins.</title>
        <authorList>
            <person name="Ban N."/>
            <person name="Beckmann R."/>
            <person name="Cate J.H.D."/>
            <person name="Dinman J.D."/>
            <person name="Dragon F."/>
            <person name="Ellis S.R."/>
            <person name="Lafontaine D.L.J."/>
            <person name="Lindahl L."/>
            <person name="Liljas A."/>
            <person name="Lipton J.M."/>
            <person name="McAlear M.A."/>
            <person name="Moore P.B."/>
            <person name="Noller H.F."/>
            <person name="Ortega J."/>
            <person name="Panse V.G."/>
            <person name="Ramakrishnan V."/>
            <person name="Spahn C.M.T."/>
            <person name="Steitz T.A."/>
            <person name="Tchorzewski M."/>
            <person name="Tollervey D."/>
            <person name="Warren A.J."/>
            <person name="Williamson J.R."/>
            <person name="Wilson D."/>
            <person name="Yonath A."/>
            <person name="Yusupov M."/>
        </authorList>
    </citation>
    <scope>NOMENCLATURE</scope>
</reference>
<reference key="11">
    <citation type="journal article" date="2003" name="Cell">
        <title>Study of the structural dynamics of the E. coli 70S ribosome using real-space refinement.</title>
        <authorList>
            <person name="Gao H."/>
            <person name="Sengupta J."/>
            <person name="Valle M."/>
            <person name="Korostelev A."/>
            <person name="Eswar N."/>
            <person name="Stagg S.M."/>
            <person name="Van Roey P."/>
            <person name="Agrawal R.K."/>
            <person name="Harvey S.C."/>
            <person name="Sali A."/>
            <person name="Chapman M.S."/>
            <person name="Frank J."/>
        </authorList>
    </citation>
    <scope>STRUCTURE BY ELECTRON MICROSCOPY (11.50 ANGSTROMS)</scope>
    <scope>SUBUNIT</scope>
    <source>
        <strain>MRE-600</strain>
    </source>
</reference>
<reference key="12">
    <citation type="journal article" date="2005" name="Science">
        <title>Structures of the bacterial ribosome at 3.5 A resolution.</title>
        <authorList>
            <person name="Schuwirth B.S."/>
            <person name="Borovinskaya M.A."/>
            <person name="Hau C.W."/>
            <person name="Zhang W."/>
            <person name="Vila-Sanjurjo A."/>
            <person name="Holton J.M."/>
            <person name="Cate J.H.D."/>
        </authorList>
    </citation>
    <scope>X-RAY CRYSTALLOGRAPHY (3.46 ANGSTROMS) OF 2 DIFFERENT RIBOSOME STRUCTURES</scope>
    <scope>SUBUNIT</scope>
    <source>
        <strain>MRE-600</strain>
    </source>
</reference>
<reference key="13">
    <citation type="journal article" date="2014" name="Cell Rep.">
        <title>Molecular basis for the ribosome functioning as an L-tryptophan sensor.</title>
        <authorList>
            <person name="Bischoff L."/>
            <person name="Berninghausen O."/>
            <person name="Beckmann R."/>
        </authorList>
    </citation>
    <scope>STRUCTURE BY ELECTRON MICROSCOPY (3.80 ANGSTROMS) OF TNAC-STALLED 50S RIBOSOMAL SUBUNIT</scope>
    <scope>SUBUNIT</scope>
    <source>
        <strain>K12 / A19 / KC6</strain>
    </source>
</reference>
<reference key="14">
    <citation type="journal article" date="2014" name="PLoS Biol.">
        <title>Structural and functional insights into the mode of action of a universally conserved Obg GTPase.</title>
        <authorList>
            <person name="Feng B."/>
            <person name="Mandava C.S."/>
            <person name="Guo Q."/>
            <person name="Wang J."/>
            <person name="Cao W."/>
            <person name="Li N."/>
            <person name="Zhang Y."/>
            <person name="Zhang Y."/>
            <person name="Wang Z."/>
            <person name="Wu J."/>
            <person name="Sanyal S."/>
            <person name="Lei J."/>
            <person name="Gao N."/>
        </authorList>
    </citation>
    <scope>STRUCTURE BY ELECTRON MICROSCOPY (5.5 ANGSTROMS) OF 50S RIBOSOMAL SUBUNIT IN COMPLEX WITH OBGE AND GMP-PNP</scope>
    <scope>SUBUNIT</scope>
</reference>
<reference key="15">
    <citation type="journal article" date="2017" name="Nature">
        <title>Mechanistic insights into the alternative translation termination by ArfA and RF2.</title>
        <authorList>
            <person name="Ma C."/>
            <person name="Kurita D."/>
            <person name="Li N."/>
            <person name="Chen Y."/>
            <person name="Himeno H."/>
            <person name="Gao N."/>
        </authorList>
    </citation>
    <scope>STRUCTURE BY ELECTRON MICROSCOPY (3.0 ANGSTROMS) OF 70S RIBOSOME IN COMPLEX WITH ARFA AND RF2</scope>
    <scope>SUBUNIT</scope>
</reference>
<reference key="16">
    <citation type="journal article" date="2017" name="Nature">
        <title>Structural basis for ArfA-RF2-mediated translation termination on mRNAs lacking stop codons.</title>
        <authorList>
            <person name="Huter P."/>
            <person name="Mueller C."/>
            <person name="Beckert B."/>
            <person name="Arenz S."/>
            <person name="Berninghausen O."/>
            <person name="Beckmann R."/>
            <person name="Wilson D.N."/>
        </authorList>
    </citation>
    <scope>STRUCTURE BY ELECTRON MICROSCOPY (3.1 ANGSTROMS) OF 70S RIBOSOME IN COMPLEX WITH ARFA AND RF2</scope>
    <scope>SUBUNIT</scope>
</reference>
<reference key="17">
    <citation type="journal article" date="2016" name="Science">
        <title>Translational termination without a stop codon.</title>
        <authorList>
            <person name="James N.R."/>
            <person name="Brown A."/>
            <person name="Gordiyenko Y."/>
            <person name="Ramakrishnan V."/>
        </authorList>
    </citation>
    <scope>STRUCTURE BY ELECTRON MICROSCOPY (2.97 ANGSTROMS) OF 70S RIBOSOME IN COMPLEX WITH ARFA AND RF2</scope>
    <scope>SUBUNIT</scope>
</reference>
<reference key="18">
    <citation type="journal article" date="2017" name="Nature">
        <title>Structural basis of co-translational quality control by ArfA and RF2 bound to ribosome.</title>
        <authorList>
            <person name="Zeng F."/>
            <person name="Chen Y."/>
            <person name="Remis J."/>
            <person name="Shekhar M."/>
            <person name="Phillips J.C."/>
            <person name="Tajkhorshid E."/>
            <person name="Jin H."/>
        </authorList>
    </citation>
    <scope>STRUCTURE BY ELECTRON MICROSCOPY (3.52 ANGSTROMS) OF 70S RIBOSOME IN COMPLEX WITH ARFA AND RF2</scope>
    <scope>SUBUNIT</scope>
</reference>
<reference evidence="18 19 20" key="19">
    <citation type="journal article" date="2021" name="Mol. Cell">
        <title>Snapshots of native pre-50S ribosomes reveal a biogenesis factor network and evolutionary specialization.</title>
        <authorList>
            <person name="Nikolay R."/>
            <person name="Hilal T."/>
            <person name="Schmidt S."/>
            <person name="Qin B."/>
            <person name="Schwefel D."/>
            <person name="Vieira-Vieira C.H."/>
            <person name="Mielke T."/>
            <person name="Burger J."/>
            <person name="Loerke J."/>
            <person name="Amikura K."/>
            <person name="Flugel T."/>
            <person name="Ueda T."/>
            <person name="Selbach M."/>
            <person name="Deuerling E."/>
            <person name="Spahn C.M.T."/>
        </authorList>
    </citation>
    <scope>STRUCTURE BY ELECTRON MICROSCOPY (2.40 ANGSTROMS) IN ASSOCIATION WITH PRE-50S RIBOSOMAL SUBUNIT</scope>
    <scope>FUNCTION</scope>
    <scope>SUBUNIT</scope>
    <scope>23S RRNA-BINDING</scope>
    <source>
        <strain>K12 / MG1655 / ATCC 47076</strain>
    </source>
</reference>
<reference key="20">
    <citation type="journal article" date="2024" name="Nucleic Acids Res.">
        <title>YjgA plays dual roles in enhancing PTC maturation.</title>
        <authorList>
            <person name="Du M."/>
            <person name="Deng C."/>
            <person name="Yu T."/>
            <person name="Zhou Q."/>
            <person name="Zeng F."/>
        </authorList>
    </citation>
    <scope>STRUCTURE BY ELECTRON MICROSCOPY (3.63 ANGSTROMS) OF PRE-50S RIBOSOME PARTICLES</scope>
    <scope>INTERACTION WITH DARP</scope>
    <source>
        <strain>B / BL21</strain>
    </source>
</reference>
<sequence>MLQPKRTKFRKMHKGRNRGLAQGTDVSFGSFGLKAVGRGRLTARQIEAARRAMTRAVKRQGKIWIRVFPDKPITEKPLAVRMGKGKGNVEYWVALIQPGKVLYEMDGVPEELAREAFKLAAAKLPIKTTFVTKTVM</sequence>
<evidence type="ECO:0000255" key="1">
    <source>
        <dbReference type="HAMAP-Rule" id="MF_01342"/>
    </source>
</evidence>
<evidence type="ECO:0000269" key="2">
    <source>
    </source>
</evidence>
<evidence type="ECO:0000269" key="3">
    <source>
    </source>
</evidence>
<evidence type="ECO:0000269" key="4">
    <source>
    </source>
</evidence>
<evidence type="ECO:0000269" key="5">
    <source>
    </source>
</evidence>
<evidence type="ECO:0000269" key="6">
    <source>
    </source>
</evidence>
<evidence type="ECO:0000269" key="7">
    <source>
    </source>
</evidence>
<evidence type="ECO:0000269" key="8">
    <source>
    </source>
</evidence>
<evidence type="ECO:0000269" key="9">
    <source>
    </source>
</evidence>
<evidence type="ECO:0000269" key="10">
    <source>
    </source>
</evidence>
<evidence type="ECO:0000269" key="11">
    <source>
    </source>
</evidence>
<evidence type="ECO:0000269" key="12">
    <source>
    </source>
</evidence>
<evidence type="ECO:0000269" key="13">
    <source>
    </source>
</evidence>
<evidence type="ECO:0000269" key="14">
    <source>
    </source>
</evidence>
<evidence type="ECO:0000269" key="15">
    <source>
    </source>
</evidence>
<evidence type="ECO:0000303" key="16">
    <source>
    </source>
</evidence>
<evidence type="ECO:0000305" key="17"/>
<evidence type="ECO:0007744" key="18">
    <source>
        <dbReference type="PDB" id="7BL4"/>
    </source>
</evidence>
<evidence type="ECO:0007744" key="19">
    <source>
        <dbReference type="PDB" id="7BL5"/>
    </source>
</evidence>
<evidence type="ECO:0007744" key="20">
    <source>
        <dbReference type="PDB" id="7BL6"/>
    </source>
</evidence>
<evidence type="ECO:0007829" key="21">
    <source>
        <dbReference type="PDB" id="6XZ7"/>
    </source>
</evidence>
<evidence type="ECO:0007829" key="22">
    <source>
        <dbReference type="PDB" id="7BL5"/>
    </source>
</evidence>
<evidence type="ECO:0007829" key="23">
    <source>
        <dbReference type="PDB" id="8CGK"/>
    </source>
</evidence>
<protein>
    <recommendedName>
        <fullName evidence="1 16">Large ribosomal subunit protein uL16</fullName>
    </recommendedName>
    <alternativeName>
        <fullName>50S ribosomal protein L16</fullName>
    </alternativeName>
</protein>
<organism>
    <name type="scientific">Escherichia coli (strain K12)</name>
    <dbReference type="NCBI Taxonomy" id="83333"/>
    <lineage>
        <taxon>Bacteria</taxon>
        <taxon>Pseudomonadati</taxon>
        <taxon>Pseudomonadota</taxon>
        <taxon>Gammaproteobacteria</taxon>
        <taxon>Enterobacterales</taxon>
        <taxon>Enterobacteriaceae</taxon>
        <taxon>Escherichia</taxon>
    </lineage>
</organism>
<gene>
    <name evidence="1" type="primary">rplP</name>
    <name type="ordered locus">b3313</name>
    <name type="ordered locus">JW3275</name>
</gene>
<proteinExistence type="evidence at protein level"/>
<accession>P0ADY7</accession>
<accession>P02414</accession>
<accession>Q2M6X8</accession>
<feature type="chain" id="PRO_0000062101" description="Large ribosomal subunit protein uL16">
    <location>
        <begin position="1"/>
        <end position="136"/>
    </location>
</feature>
<feature type="modified residue" description="N-methylmethionine" evidence="14">
    <location>
        <position position="1"/>
    </location>
</feature>
<feature type="modified residue" description="(3R)-3-hydroxyarginine" evidence="5">
    <location>
        <position position="81"/>
    </location>
</feature>
<feature type="strand" evidence="22">
    <location>
        <begin position="8"/>
        <end position="10"/>
    </location>
</feature>
<feature type="strand" evidence="23">
    <location>
        <begin position="28"/>
        <end position="35"/>
    </location>
</feature>
<feature type="strand" evidence="23">
    <location>
        <begin position="39"/>
        <end position="42"/>
    </location>
</feature>
<feature type="helix" evidence="23">
    <location>
        <begin position="43"/>
        <end position="57"/>
    </location>
</feature>
<feature type="strand" evidence="23">
    <location>
        <begin position="61"/>
        <end position="65"/>
    </location>
</feature>
<feature type="strand" evidence="23">
    <location>
        <begin position="71"/>
        <end position="75"/>
    </location>
</feature>
<feature type="strand" evidence="22">
    <location>
        <begin position="84"/>
        <end position="86"/>
    </location>
</feature>
<feature type="strand" evidence="23">
    <location>
        <begin position="88"/>
        <end position="96"/>
    </location>
</feature>
<feature type="strand" evidence="23">
    <location>
        <begin position="101"/>
        <end position="108"/>
    </location>
</feature>
<feature type="helix" evidence="23">
    <location>
        <begin position="110"/>
        <end position="121"/>
    </location>
</feature>
<feature type="strand" evidence="21">
    <location>
        <begin position="124"/>
        <end position="126"/>
    </location>
</feature>
<feature type="strand" evidence="23">
    <location>
        <begin position="128"/>
        <end position="132"/>
    </location>
</feature>
<dbReference type="EMBL" id="X02613">
    <property type="protein sequence ID" value="CAA26467.1"/>
    <property type="molecule type" value="Genomic_DNA"/>
</dbReference>
<dbReference type="EMBL" id="U18997">
    <property type="protein sequence ID" value="AAA58110.1"/>
    <property type="molecule type" value="Genomic_DNA"/>
</dbReference>
<dbReference type="EMBL" id="U00096">
    <property type="protein sequence ID" value="AAC76338.1"/>
    <property type="molecule type" value="Genomic_DNA"/>
</dbReference>
<dbReference type="EMBL" id="AP009048">
    <property type="protein sequence ID" value="BAE77978.1"/>
    <property type="molecule type" value="Genomic_DNA"/>
</dbReference>
<dbReference type="EMBL" id="AH003257">
    <property type="protein sequence ID" value="AAA83901.1"/>
    <property type="molecule type" value="Genomic_DNA"/>
</dbReference>
<dbReference type="PIR" id="I23129">
    <property type="entry name" value="R5EC16"/>
</dbReference>
<dbReference type="RefSeq" id="NP_417772.1">
    <property type="nucleotide sequence ID" value="NC_000913.3"/>
</dbReference>
<dbReference type="RefSeq" id="WP_000941212.1">
    <property type="nucleotide sequence ID" value="NZ_STEB01000038.1"/>
</dbReference>
<dbReference type="PDB" id="2J28">
    <property type="method" value="EM"/>
    <property type="resolution" value="8.00 A"/>
    <property type="chains" value="M=1-136"/>
</dbReference>
<dbReference type="PDB" id="2RDO">
    <property type="method" value="EM"/>
    <property type="resolution" value="9.10 A"/>
    <property type="chains" value="M=1-136"/>
</dbReference>
<dbReference type="PDB" id="3BBX">
    <property type="method" value="EM"/>
    <property type="resolution" value="10.00 A"/>
    <property type="chains" value="M=1-136"/>
</dbReference>
<dbReference type="PDB" id="3J5L">
    <property type="method" value="EM"/>
    <property type="resolution" value="6.60 A"/>
    <property type="chains" value="M=1-136"/>
</dbReference>
<dbReference type="PDB" id="3J7Z">
    <property type="method" value="EM"/>
    <property type="resolution" value="3.90 A"/>
    <property type="chains" value="M=1-136"/>
</dbReference>
<dbReference type="PDB" id="3J8G">
    <property type="method" value="EM"/>
    <property type="resolution" value="5.00 A"/>
    <property type="chains" value="M=1-136"/>
</dbReference>
<dbReference type="PDB" id="3J9Y">
    <property type="method" value="EM"/>
    <property type="resolution" value="3.90 A"/>
    <property type="chains" value="M=1-136"/>
</dbReference>
<dbReference type="PDB" id="3J9Z">
    <property type="method" value="EM"/>
    <property type="resolution" value="3.60 A"/>
    <property type="chains" value="LI=1-136"/>
</dbReference>
<dbReference type="PDB" id="3JA1">
    <property type="method" value="EM"/>
    <property type="resolution" value="3.60 A"/>
    <property type="chains" value="LO=1-136"/>
</dbReference>
<dbReference type="PDB" id="3JBU">
    <property type="method" value="EM"/>
    <property type="resolution" value="3.64 A"/>
    <property type="chains" value="m=1-136"/>
</dbReference>
<dbReference type="PDB" id="3JBV">
    <property type="method" value="EM"/>
    <property type="resolution" value="3.32 A"/>
    <property type="chains" value="m=1-136"/>
</dbReference>
<dbReference type="PDB" id="3JCD">
    <property type="method" value="EM"/>
    <property type="resolution" value="3.70 A"/>
    <property type="chains" value="M=1-136"/>
</dbReference>
<dbReference type="PDB" id="3JCE">
    <property type="method" value="EM"/>
    <property type="resolution" value="3.20 A"/>
    <property type="chains" value="M=1-136"/>
</dbReference>
<dbReference type="PDB" id="3JCJ">
    <property type="method" value="EM"/>
    <property type="resolution" value="3.70 A"/>
    <property type="chains" value="L=1-136"/>
</dbReference>
<dbReference type="PDB" id="3JCN">
    <property type="method" value="EM"/>
    <property type="resolution" value="4.60 A"/>
    <property type="chains" value="M=1-136"/>
</dbReference>
<dbReference type="PDB" id="4CSU">
    <property type="method" value="EM"/>
    <property type="resolution" value="5.50 A"/>
    <property type="chains" value="M=1-136"/>
</dbReference>
<dbReference type="PDB" id="4U1U">
    <property type="method" value="X-ray"/>
    <property type="resolution" value="2.95 A"/>
    <property type="chains" value="BM/DM=1-136"/>
</dbReference>
<dbReference type="PDB" id="4U1V">
    <property type="method" value="X-ray"/>
    <property type="resolution" value="3.00 A"/>
    <property type="chains" value="BM/DM=1-136"/>
</dbReference>
<dbReference type="PDB" id="4U20">
    <property type="method" value="X-ray"/>
    <property type="resolution" value="2.90 A"/>
    <property type="chains" value="BM/DM=1-136"/>
</dbReference>
<dbReference type="PDB" id="4U24">
    <property type="method" value="X-ray"/>
    <property type="resolution" value="2.90 A"/>
    <property type="chains" value="BM/DM=1-136"/>
</dbReference>
<dbReference type="PDB" id="4U25">
    <property type="method" value="X-ray"/>
    <property type="resolution" value="2.90 A"/>
    <property type="chains" value="BM/DM=1-136"/>
</dbReference>
<dbReference type="PDB" id="4U26">
    <property type="method" value="X-ray"/>
    <property type="resolution" value="2.80 A"/>
    <property type="chains" value="BM/DM=1-136"/>
</dbReference>
<dbReference type="PDB" id="4U27">
    <property type="method" value="X-ray"/>
    <property type="resolution" value="2.80 A"/>
    <property type="chains" value="BM/DM=1-136"/>
</dbReference>
<dbReference type="PDB" id="4UY8">
    <property type="method" value="EM"/>
    <property type="resolution" value="3.80 A"/>
    <property type="chains" value="M=1-136"/>
</dbReference>
<dbReference type="PDB" id="4V47">
    <property type="method" value="EM"/>
    <property type="resolution" value="12.30 A"/>
    <property type="chains" value="AK=1-136"/>
</dbReference>
<dbReference type="PDB" id="4V48">
    <property type="method" value="EM"/>
    <property type="resolution" value="11.50 A"/>
    <property type="chains" value="AK=1-136"/>
</dbReference>
<dbReference type="PDB" id="4V4H">
    <property type="method" value="X-ray"/>
    <property type="resolution" value="3.46 A"/>
    <property type="chains" value="BM/DM=1-136"/>
</dbReference>
<dbReference type="PDB" id="4V4Q">
    <property type="method" value="X-ray"/>
    <property type="resolution" value="3.46 A"/>
    <property type="chains" value="BM/DM=1-136"/>
</dbReference>
<dbReference type="PDB" id="4V4V">
    <property type="method" value="EM"/>
    <property type="resolution" value="15.00 A"/>
    <property type="chains" value="BK=3-133"/>
</dbReference>
<dbReference type="PDB" id="4V4W">
    <property type="method" value="EM"/>
    <property type="resolution" value="15.00 A"/>
    <property type="chains" value="BK=3-133"/>
</dbReference>
<dbReference type="PDB" id="4V50">
    <property type="method" value="X-ray"/>
    <property type="resolution" value="3.22 A"/>
    <property type="chains" value="BM/DM=1-136"/>
</dbReference>
<dbReference type="PDB" id="4V52">
    <property type="method" value="X-ray"/>
    <property type="resolution" value="3.21 A"/>
    <property type="chains" value="BM/DM=1-136"/>
</dbReference>
<dbReference type="PDB" id="4V53">
    <property type="method" value="X-ray"/>
    <property type="resolution" value="3.54 A"/>
    <property type="chains" value="BM/DM=1-136"/>
</dbReference>
<dbReference type="PDB" id="4V54">
    <property type="method" value="X-ray"/>
    <property type="resolution" value="3.30 A"/>
    <property type="chains" value="BM/DM=1-136"/>
</dbReference>
<dbReference type="PDB" id="4V55">
    <property type="method" value="X-ray"/>
    <property type="resolution" value="4.00 A"/>
    <property type="chains" value="BM/DM=1-136"/>
</dbReference>
<dbReference type="PDB" id="4V56">
    <property type="method" value="X-ray"/>
    <property type="resolution" value="3.93 A"/>
    <property type="chains" value="BM/DM=1-136"/>
</dbReference>
<dbReference type="PDB" id="4V57">
    <property type="method" value="X-ray"/>
    <property type="resolution" value="3.50 A"/>
    <property type="chains" value="BM/DM=1-136"/>
</dbReference>
<dbReference type="PDB" id="4V5B">
    <property type="method" value="X-ray"/>
    <property type="resolution" value="3.74 A"/>
    <property type="chains" value="AM/CM=1-136"/>
</dbReference>
<dbReference type="PDB" id="4V5H">
    <property type="method" value="EM"/>
    <property type="resolution" value="5.80 A"/>
    <property type="chains" value="BM=1-136"/>
</dbReference>
<dbReference type="PDB" id="4V5Y">
    <property type="method" value="X-ray"/>
    <property type="resolution" value="4.45 A"/>
    <property type="chains" value="BM/DM=1-136"/>
</dbReference>
<dbReference type="PDB" id="4V64">
    <property type="method" value="X-ray"/>
    <property type="resolution" value="3.50 A"/>
    <property type="chains" value="BM/DM=1-136"/>
</dbReference>
<dbReference type="PDB" id="4V65">
    <property type="method" value="EM"/>
    <property type="resolution" value="9.00 A"/>
    <property type="chains" value="BF=1-136"/>
</dbReference>
<dbReference type="PDB" id="4V66">
    <property type="method" value="EM"/>
    <property type="resolution" value="9.00 A"/>
    <property type="chains" value="BF=1-136"/>
</dbReference>
<dbReference type="PDB" id="4V69">
    <property type="method" value="EM"/>
    <property type="resolution" value="6.70 A"/>
    <property type="chains" value="BM=1-136"/>
</dbReference>
<dbReference type="PDB" id="4V6C">
    <property type="method" value="X-ray"/>
    <property type="resolution" value="3.19 A"/>
    <property type="chains" value="BM/DM=1-136"/>
</dbReference>
<dbReference type="PDB" id="4V6D">
    <property type="method" value="X-ray"/>
    <property type="resolution" value="3.81 A"/>
    <property type="chains" value="BM/DM=1-136"/>
</dbReference>
<dbReference type="PDB" id="4V6E">
    <property type="method" value="X-ray"/>
    <property type="resolution" value="3.71 A"/>
    <property type="chains" value="BM/DM=1-136"/>
</dbReference>
<dbReference type="PDB" id="4V6K">
    <property type="method" value="EM"/>
    <property type="resolution" value="8.25 A"/>
    <property type="chains" value="AN=1-136"/>
</dbReference>
<dbReference type="PDB" id="4V6L">
    <property type="method" value="EM"/>
    <property type="resolution" value="13.20 A"/>
    <property type="chains" value="BN=1-136"/>
</dbReference>
<dbReference type="PDB" id="4V6M">
    <property type="method" value="EM"/>
    <property type="resolution" value="7.10 A"/>
    <property type="chains" value="BM=1-136"/>
</dbReference>
<dbReference type="PDB" id="4V6N">
    <property type="method" value="EM"/>
    <property type="resolution" value="12.10 A"/>
    <property type="chains" value="AO=1-136"/>
</dbReference>
<dbReference type="PDB" id="4V6O">
    <property type="method" value="EM"/>
    <property type="resolution" value="14.70 A"/>
    <property type="chains" value="BO=1-136"/>
</dbReference>
<dbReference type="PDB" id="4V6P">
    <property type="method" value="EM"/>
    <property type="resolution" value="13.50 A"/>
    <property type="chains" value="BO=1-136"/>
</dbReference>
<dbReference type="PDB" id="4V6Q">
    <property type="method" value="EM"/>
    <property type="resolution" value="11.50 A"/>
    <property type="chains" value="BO=1-136"/>
</dbReference>
<dbReference type="PDB" id="4V6R">
    <property type="method" value="EM"/>
    <property type="resolution" value="11.50 A"/>
    <property type="chains" value="BO=1-136"/>
</dbReference>
<dbReference type="PDB" id="4V6S">
    <property type="method" value="EM"/>
    <property type="resolution" value="13.10 A"/>
    <property type="chains" value="AO=1-136"/>
</dbReference>
<dbReference type="PDB" id="4V6T">
    <property type="method" value="EM"/>
    <property type="resolution" value="8.30 A"/>
    <property type="chains" value="BM=1-136"/>
</dbReference>
<dbReference type="PDB" id="4V6V">
    <property type="method" value="EM"/>
    <property type="resolution" value="9.80 A"/>
    <property type="chains" value="BQ=1-136"/>
</dbReference>
<dbReference type="PDB" id="4V6Y">
    <property type="method" value="EM"/>
    <property type="resolution" value="12.00 A"/>
    <property type="chains" value="BM=1-136"/>
</dbReference>
<dbReference type="PDB" id="4V6Z">
    <property type="method" value="EM"/>
    <property type="resolution" value="12.00 A"/>
    <property type="chains" value="BM=1-136"/>
</dbReference>
<dbReference type="PDB" id="4V70">
    <property type="method" value="EM"/>
    <property type="resolution" value="17.00 A"/>
    <property type="chains" value="BM=1-136"/>
</dbReference>
<dbReference type="PDB" id="4V71">
    <property type="method" value="EM"/>
    <property type="resolution" value="20.00 A"/>
    <property type="chains" value="BM=1-136"/>
</dbReference>
<dbReference type="PDB" id="4V72">
    <property type="method" value="EM"/>
    <property type="resolution" value="13.00 A"/>
    <property type="chains" value="BM=1-136"/>
</dbReference>
<dbReference type="PDB" id="4V73">
    <property type="method" value="EM"/>
    <property type="resolution" value="15.00 A"/>
    <property type="chains" value="BM=1-136"/>
</dbReference>
<dbReference type="PDB" id="4V74">
    <property type="method" value="EM"/>
    <property type="resolution" value="17.00 A"/>
    <property type="chains" value="BM=1-136"/>
</dbReference>
<dbReference type="PDB" id="4V75">
    <property type="method" value="EM"/>
    <property type="resolution" value="12.00 A"/>
    <property type="chains" value="BM=1-136"/>
</dbReference>
<dbReference type="PDB" id="4V76">
    <property type="method" value="EM"/>
    <property type="resolution" value="17.00 A"/>
    <property type="chains" value="BM=1-136"/>
</dbReference>
<dbReference type="PDB" id="4V77">
    <property type="method" value="EM"/>
    <property type="resolution" value="17.00 A"/>
    <property type="chains" value="BM=1-136"/>
</dbReference>
<dbReference type="PDB" id="4V78">
    <property type="method" value="EM"/>
    <property type="resolution" value="20.00 A"/>
    <property type="chains" value="BM=1-136"/>
</dbReference>
<dbReference type="PDB" id="4V79">
    <property type="method" value="EM"/>
    <property type="resolution" value="15.00 A"/>
    <property type="chains" value="BM=1-136"/>
</dbReference>
<dbReference type="PDB" id="4V7A">
    <property type="method" value="EM"/>
    <property type="resolution" value="9.00 A"/>
    <property type="chains" value="BM=1-136"/>
</dbReference>
<dbReference type="PDB" id="4V7B">
    <property type="method" value="EM"/>
    <property type="resolution" value="6.80 A"/>
    <property type="chains" value="BM=1-136"/>
</dbReference>
<dbReference type="PDB" id="4V7C">
    <property type="method" value="EM"/>
    <property type="resolution" value="7.60 A"/>
    <property type="chains" value="BO=1-136"/>
</dbReference>
<dbReference type="PDB" id="4V7D">
    <property type="method" value="EM"/>
    <property type="resolution" value="7.60 A"/>
    <property type="chains" value="AP=1-136"/>
</dbReference>
<dbReference type="PDB" id="4V7I">
    <property type="method" value="EM"/>
    <property type="resolution" value="9.60 A"/>
    <property type="chains" value="AM=1-136"/>
</dbReference>
<dbReference type="PDB" id="4V7S">
    <property type="method" value="X-ray"/>
    <property type="resolution" value="3.25 A"/>
    <property type="chains" value="BM/DM=1-136"/>
</dbReference>
<dbReference type="PDB" id="4V7T">
    <property type="method" value="X-ray"/>
    <property type="resolution" value="3.19 A"/>
    <property type="chains" value="BM/DM=1-136"/>
</dbReference>
<dbReference type="PDB" id="4V7U">
    <property type="method" value="X-ray"/>
    <property type="resolution" value="3.10 A"/>
    <property type="chains" value="BM/DM=1-136"/>
</dbReference>
<dbReference type="PDB" id="4V7V">
    <property type="method" value="X-ray"/>
    <property type="resolution" value="3.29 A"/>
    <property type="chains" value="BM/DM=1-136"/>
</dbReference>
<dbReference type="PDB" id="4V85">
    <property type="method" value="X-ray"/>
    <property type="resolution" value="3.20 A"/>
    <property type="chains" value="BQ=1-136"/>
</dbReference>
<dbReference type="PDB" id="4V89">
    <property type="method" value="X-ray"/>
    <property type="resolution" value="3.70 A"/>
    <property type="chains" value="BQ=1-136"/>
</dbReference>
<dbReference type="PDB" id="4V9C">
    <property type="method" value="X-ray"/>
    <property type="resolution" value="3.30 A"/>
    <property type="chains" value="BM/DM=1-136"/>
</dbReference>
<dbReference type="PDB" id="4V9D">
    <property type="method" value="X-ray"/>
    <property type="resolution" value="3.00 A"/>
    <property type="chains" value="CM/DM=1-136"/>
</dbReference>
<dbReference type="PDB" id="4V9O">
    <property type="method" value="X-ray"/>
    <property type="resolution" value="2.90 A"/>
    <property type="chains" value="AM/CM/EM/GM=1-136"/>
</dbReference>
<dbReference type="PDB" id="4V9P">
    <property type="method" value="X-ray"/>
    <property type="resolution" value="2.90 A"/>
    <property type="chains" value="AM/CM/EM/GM=1-136"/>
</dbReference>
<dbReference type="PDB" id="4WF1">
    <property type="method" value="X-ray"/>
    <property type="resolution" value="3.09 A"/>
    <property type="chains" value="BM/DM=1-136"/>
</dbReference>
<dbReference type="PDB" id="4WOI">
    <property type="method" value="X-ray"/>
    <property type="resolution" value="3.00 A"/>
    <property type="chains" value="BM/CM=1-136"/>
</dbReference>
<dbReference type="PDB" id="4WWW">
    <property type="method" value="X-ray"/>
    <property type="resolution" value="3.10 A"/>
    <property type="chains" value="RM/YM=1-136"/>
</dbReference>
<dbReference type="PDB" id="4YBB">
    <property type="method" value="X-ray"/>
    <property type="resolution" value="2.10 A"/>
    <property type="chains" value="CN/DN=1-136"/>
</dbReference>
<dbReference type="PDB" id="5ADY">
    <property type="method" value="EM"/>
    <property type="resolution" value="4.50 A"/>
    <property type="chains" value="M=1-136"/>
</dbReference>
<dbReference type="PDB" id="5AFI">
    <property type="method" value="EM"/>
    <property type="resolution" value="2.90 A"/>
    <property type="chains" value="M=1-136"/>
</dbReference>
<dbReference type="PDB" id="5AKA">
    <property type="method" value="EM"/>
    <property type="resolution" value="5.70 A"/>
    <property type="chains" value="M=1-136"/>
</dbReference>
<dbReference type="PDB" id="5GAD">
    <property type="method" value="EM"/>
    <property type="resolution" value="3.70 A"/>
    <property type="chains" value="N=1-136"/>
</dbReference>
<dbReference type="PDB" id="5GAE">
    <property type="method" value="EM"/>
    <property type="resolution" value="3.33 A"/>
    <property type="chains" value="N=1-136"/>
</dbReference>
<dbReference type="PDB" id="5GAF">
    <property type="method" value="EM"/>
    <property type="resolution" value="4.30 A"/>
    <property type="chains" value="N=1-136"/>
</dbReference>
<dbReference type="PDB" id="5GAG">
    <property type="method" value="EM"/>
    <property type="resolution" value="3.80 A"/>
    <property type="chains" value="N=1-136"/>
</dbReference>
<dbReference type="PDB" id="5GAH">
    <property type="method" value="EM"/>
    <property type="resolution" value="3.80 A"/>
    <property type="chains" value="N=1-136"/>
</dbReference>
<dbReference type="PDB" id="5H5U">
    <property type="method" value="EM"/>
    <property type="resolution" value="3.00 A"/>
    <property type="chains" value="N=1-136"/>
</dbReference>
<dbReference type="PDB" id="5IQR">
    <property type="method" value="EM"/>
    <property type="resolution" value="3.00 A"/>
    <property type="chains" value="M=1-136"/>
</dbReference>
<dbReference type="PDB" id="5IT8">
    <property type="method" value="X-ray"/>
    <property type="resolution" value="3.12 A"/>
    <property type="chains" value="CN/DN=1-136"/>
</dbReference>
<dbReference type="PDB" id="5J5B">
    <property type="method" value="X-ray"/>
    <property type="resolution" value="2.80 A"/>
    <property type="chains" value="CN/DN=1-136"/>
</dbReference>
<dbReference type="PDB" id="5J7L">
    <property type="method" value="X-ray"/>
    <property type="resolution" value="3.00 A"/>
    <property type="chains" value="CN/DN=1-136"/>
</dbReference>
<dbReference type="PDB" id="5J88">
    <property type="method" value="X-ray"/>
    <property type="resolution" value="3.32 A"/>
    <property type="chains" value="CN/DN=1-136"/>
</dbReference>
<dbReference type="PDB" id="5J8A">
    <property type="method" value="X-ray"/>
    <property type="resolution" value="3.10 A"/>
    <property type="chains" value="CN/DN=1-136"/>
</dbReference>
<dbReference type="PDB" id="5J91">
    <property type="method" value="X-ray"/>
    <property type="resolution" value="2.96 A"/>
    <property type="chains" value="CN/DN=1-136"/>
</dbReference>
<dbReference type="PDB" id="5JC9">
    <property type="method" value="X-ray"/>
    <property type="resolution" value="3.03 A"/>
    <property type="chains" value="CN/DN=1-136"/>
</dbReference>
<dbReference type="PDB" id="5JTE">
    <property type="method" value="EM"/>
    <property type="resolution" value="3.60 A"/>
    <property type="chains" value="BM=1-136"/>
</dbReference>
<dbReference type="PDB" id="5JU8">
    <property type="method" value="EM"/>
    <property type="resolution" value="3.60 A"/>
    <property type="chains" value="BM=1-136"/>
</dbReference>
<dbReference type="PDB" id="5KCR">
    <property type="method" value="EM"/>
    <property type="resolution" value="3.60 A"/>
    <property type="chains" value="1Q=1-136"/>
</dbReference>
<dbReference type="PDB" id="5KCS">
    <property type="method" value="EM"/>
    <property type="resolution" value="3.90 A"/>
    <property type="chains" value="1Q=1-136"/>
</dbReference>
<dbReference type="PDB" id="5KPS">
    <property type="method" value="EM"/>
    <property type="resolution" value="3.90 A"/>
    <property type="chains" value="M=1-136"/>
</dbReference>
<dbReference type="PDB" id="5KPV">
    <property type="method" value="EM"/>
    <property type="resolution" value="4.10 A"/>
    <property type="chains" value="L=1-136"/>
</dbReference>
<dbReference type="PDB" id="5KPW">
    <property type="method" value="EM"/>
    <property type="resolution" value="3.90 A"/>
    <property type="chains" value="L=1-136"/>
</dbReference>
<dbReference type="PDB" id="5KPX">
    <property type="method" value="EM"/>
    <property type="resolution" value="3.90 A"/>
    <property type="chains" value="L=1-136"/>
</dbReference>
<dbReference type="PDB" id="5L3P">
    <property type="method" value="EM"/>
    <property type="resolution" value="3.70 A"/>
    <property type="chains" value="Q=1-136"/>
</dbReference>
<dbReference type="PDB" id="5LZA">
    <property type="method" value="EM"/>
    <property type="resolution" value="3.60 A"/>
    <property type="chains" value="M=1-136"/>
</dbReference>
<dbReference type="PDB" id="5LZB">
    <property type="method" value="EM"/>
    <property type="resolution" value="5.30 A"/>
    <property type="chains" value="M=1-136"/>
</dbReference>
<dbReference type="PDB" id="5LZC">
    <property type="method" value="EM"/>
    <property type="resolution" value="4.80 A"/>
    <property type="chains" value="M=1-136"/>
</dbReference>
<dbReference type="PDB" id="5LZD">
    <property type="method" value="EM"/>
    <property type="resolution" value="3.40 A"/>
    <property type="chains" value="M=1-136"/>
</dbReference>
<dbReference type="PDB" id="5LZE">
    <property type="method" value="EM"/>
    <property type="resolution" value="3.50 A"/>
    <property type="chains" value="M=1-136"/>
</dbReference>
<dbReference type="PDB" id="5LZF">
    <property type="method" value="EM"/>
    <property type="resolution" value="4.60 A"/>
    <property type="chains" value="M=1-136"/>
</dbReference>
<dbReference type="PDB" id="5MDV">
    <property type="method" value="EM"/>
    <property type="resolution" value="2.97 A"/>
    <property type="chains" value="M=1-136"/>
</dbReference>
<dbReference type="PDB" id="5MDW">
    <property type="method" value="EM"/>
    <property type="resolution" value="3.06 A"/>
    <property type="chains" value="M=1-136"/>
</dbReference>
<dbReference type="PDB" id="5MDY">
    <property type="method" value="EM"/>
    <property type="resolution" value="3.35 A"/>
    <property type="chains" value="M=1-136"/>
</dbReference>
<dbReference type="PDB" id="5MDZ">
    <property type="method" value="EM"/>
    <property type="resolution" value="3.10 A"/>
    <property type="chains" value="M=1-136"/>
</dbReference>
<dbReference type="PDB" id="5MGP">
    <property type="method" value="EM"/>
    <property type="resolution" value="3.10 A"/>
    <property type="chains" value="M=1-136"/>
</dbReference>
<dbReference type="PDB" id="5NCO">
    <property type="method" value="EM"/>
    <property type="resolution" value="4.80 A"/>
    <property type="chains" value="N=1-136"/>
</dbReference>
<dbReference type="PDB" id="5NP6">
    <property type="method" value="EM"/>
    <property type="resolution" value="3.60 A"/>
    <property type="chains" value="k=1-136"/>
</dbReference>
<dbReference type="PDB" id="5NWY">
    <property type="method" value="EM"/>
    <property type="resolution" value="2.93 A"/>
    <property type="chains" value="Z=1-136"/>
</dbReference>
<dbReference type="PDB" id="5O2R">
    <property type="method" value="EM"/>
    <property type="resolution" value="3.40 A"/>
    <property type="chains" value="M=1-136"/>
</dbReference>
<dbReference type="PDB" id="5U4I">
    <property type="method" value="EM"/>
    <property type="resolution" value="3.50 A"/>
    <property type="chains" value="N=1-136"/>
</dbReference>
<dbReference type="PDB" id="5U9F">
    <property type="method" value="EM"/>
    <property type="resolution" value="3.20 A"/>
    <property type="chains" value="15=1-136"/>
</dbReference>
<dbReference type="PDB" id="5U9G">
    <property type="method" value="EM"/>
    <property type="resolution" value="3.20 A"/>
    <property type="chains" value="15=1-136"/>
</dbReference>
<dbReference type="PDB" id="5UYK">
    <property type="method" value="EM"/>
    <property type="resolution" value="3.90 A"/>
    <property type="chains" value="15=1-136"/>
</dbReference>
<dbReference type="PDB" id="5UYL">
    <property type="method" value="EM"/>
    <property type="resolution" value="3.60 A"/>
    <property type="chains" value="15=1-136"/>
</dbReference>
<dbReference type="PDB" id="5UYM">
    <property type="method" value="EM"/>
    <property type="resolution" value="3.20 A"/>
    <property type="chains" value="15=1-136"/>
</dbReference>
<dbReference type="PDB" id="5UYN">
    <property type="method" value="EM"/>
    <property type="resolution" value="4.00 A"/>
    <property type="chains" value="15=1-136"/>
</dbReference>
<dbReference type="PDB" id="5UYP">
    <property type="method" value="EM"/>
    <property type="resolution" value="3.90 A"/>
    <property type="chains" value="15=1-136"/>
</dbReference>
<dbReference type="PDB" id="5UYQ">
    <property type="method" value="EM"/>
    <property type="resolution" value="3.80 A"/>
    <property type="chains" value="15=1-136"/>
</dbReference>
<dbReference type="PDB" id="5WDT">
    <property type="method" value="EM"/>
    <property type="resolution" value="3.00 A"/>
    <property type="chains" value="M=1-136"/>
</dbReference>
<dbReference type="PDB" id="5WE4">
    <property type="method" value="EM"/>
    <property type="resolution" value="3.10 A"/>
    <property type="chains" value="M=1-136"/>
</dbReference>
<dbReference type="PDB" id="5WE6">
    <property type="method" value="EM"/>
    <property type="resolution" value="3.40 A"/>
    <property type="chains" value="M=1-136"/>
</dbReference>
<dbReference type="PDB" id="5WF0">
    <property type="method" value="EM"/>
    <property type="resolution" value="3.60 A"/>
    <property type="chains" value="M=1-136"/>
</dbReference>
<dbReference type="PDB" id="5WFK">
    <property type="method" value="EM"/>
    <property type="resolution" value="3.40 A"/>
    <property type="chains" value="M=1-136"/>
</dbReference>
<dbReference type="PDB" id="5WFS">
    <property type="method" value="EM"/>
    <property type="resolution" value="3.00 A"/>
    <property type="chains" value="M=1-136"/>
</dbReference>
<dbReference type="PDB" id="6BU8">
    <property type="method" value="EM"/>
    <property type="resolution" value="3.50 A"/>
    <property type="chains" value="15=1-136"/>
</dbReference>
<dbReference type="PDB" id="6BY1">
    <property type="method" value="X-ray"/>
    <property type="resolution" value="3.94 A"/>
    <property type="chains" value="CM/DM=1-136"/>
</dbReference>
<dbReference type="PDB" id="6C4H">
    <property type="method" value="EM"/>
    <property type="resolution" value="3.10 A"/>
    <property type="chains" value="N=1-136"/>
</dbReference>
<dbReference type="PDB" id="6C4I">
    <property type="method" value="EM"/>
    <property type="resolution" value="3.24 A"/>
    <property type="chains" value="N=1-136"/>
</dbReference>
<dbReference type="PDB" id="6DNC">
    <property type="method" value="EM"/>
    <property type="resolution" value="3.70 A"/>
    <property type="chains" value="Q=1-136"/>
</dbReference>
<dbReference type="PDB" id="6ENF">
    <property type="method" value="EM"/>
    <property type="resolution" value="3.20 A"/>
    <property type="chains" value="M=1-136"/>
</dbReference>
<dbReference type="PDB" id="6ENJ">
    <property type="method" value="EM"/>
    <property type="resolution" value="3.70 A"/>
    <property type="chains" value="M=1-136"/>
</dbReference>
<dbReference type="PDB" id="6ENU">
    <property type="method" value="EM"/>
    <property type="resolution" value="3.10 A"/>
    <property type="chains" value="M=1-136"/>
</dbReference>
<dbReference type="PDB" id="6GBZ">
    <property type="method" value="EM"/>
    <property type="resolution" value="3.80 A"/>
    <property type="chains" value="M=1-136"/>
</dbReference>
<dbReference type="PDB" id="6GC8">
    <property type="method" value="EM"/>
    <property type="resolution" value="3.80 A"/>
    <property type="chains" value="M=1-136"/>
</dbReference>
<dbReference type="PDB" id="6GWT">
    <property type="method" value="EM"/>
    <property type="resolution" value="3.80 A"/>
    <property type="chains" value="M=1-136"/>
</dbReference>
<dbReference type="PDB" id="6GXM">
    <property type="method" value="EM"/>
    <property type="resolution" value="3.80 A"/>
    <property type="chains" value="M=1-136"/>
</dbReference>
<dbReference type="PDB" id="6GXN">
    <property type="method" value="EM"/>
    <property type="resolution" value="3.90 A"/>
    <property type="chains" value="M=1-136"/>
</dbReference>
<dbReference type="PDB" id="6GXO">
    <property type="method" value="EM"/>
    <property type="resolution" value="3.90 A"/>
    <property type="chains" value="M=1-136"/>
</dbReference>
<dbReference type="PDB" id="6GXP">
    <property type="method" value="EM"/>
    <property type="resolution" value="4.40 A"/>
    <property type="chains" value="M=1-136"/>
</dbReference>
<dbReference type="PDB" id="6H4N">
    <property type="method" value="EM"/>
    <property type="resolution" value="3.00 A"/>
    <property type="chains" value="M=1-136"/>
</dbReference>
<dbReference type="PDB" id="6H58">
    <property type="method" value="EM"/>
    <property type="resolution" value="7.90 A"/>
    <property type="chains" value="M/MM=1-136"/>
</dbReference>
<dbReference type="PDB" id="6HRM">
    <property type="method" value="EM"/>
    <property type="resolution" value="2.96 A"/>
    <property type="chains" value="M=1-136"/>
</dbReference>
<dbReference type="PDB" id="6I0Y">
    <property type="method" value="EM"/>
    <property type="resolution" value="3.20 A"/>
    <property type="chains" value="M=1-136"/>
</dbReference>
<dbReference type="PDB" id="6I7V">
    <property type="method" value="X-ray"/>
    <property type="resolution" value="2.90 A"/>
    <property type="chains" value="CN/DN=1-136"/>
</dbReference>
<dbReference type="PDB" id="6O9J">
    <property type="method" value="EM"/>
    <property type="resolution" value="3.90 A"/>
    <property type="chains" value="M=1-136"/>
</dbReference>
<dbReference type="PDB" id="6O9K">
    <property type="method" value="EM"/>
    <property type="resolution" value="4.00 A"/>
    <property type="chains" value="M=1-136"/>
</dbReference>
<dbReference type="PDB" id="6OFX">
    <property type="method" value="EM"/>
    <property type="resolution" value="3.30 A"/>
    <property type="chains" value="m=1-136"/>
</dbReference>
<dbReference type="PDB" id="6OG7">
    <property type="method" value="EM"/>
    <property type="resolution" value="3.30 A"/>
    <property type="chains" value="m=1-136"/>
</dbReference>
<dbReference type="PDB" id="6OGF">
    <property type="method" value="EM"/>
    <property type="resolution" value="3.90 A"/>
    <property type="chains" value="m=1-136"/>
</dbReference>
<dbReference type="PDB" id="6OGG">
    <property type="method" value="EM"/>
    <property type="resolution" value="4.20 A"/>
    <property type="chains" value="m=1-136"/>
</dbReference>
<dbReference type="PDB" id="6OGI">
    <property type="method" value="EM"/>
    <property type="resolution" value="3.40 A"/>
    <property type="chains" value="m=1-136"/>
</dbReference>
<dbReference type="PDB" id="6OM6">
    <property type="method" value="EM"/>
    <property type="resolution" value="3.10 A"/>
    <property type="chains" value="M=1-136"/>
</dbReference>
<dbReference type="PDB" id="6ORE">
    <property type="method" value="EM"/>
    <property type="resolution" value="2.90 A"/>
    <property type="chains" value="M=1-136"/>
</dbReference>
<dbReference type="PDB" id="6ORL">
    <property type="method" value="EM"/>
    <property type="resolution" value="3.50 A"/>
    <property type="chains" value="M=1-136"/>
</dbReference>
<dbReference type="PDB" id="6OSK">
    <property type="method" value="EM"/>
    <property type="resolution" value="3.60 A"/>
    <property type="chains" value="M=1-136"/>
</dbReference>
<dbReference type="PDB" id="6OSQ">
    <property type="method" value="EM"/>
    <property type="resolution" value="3.50 A"/>
    <property type="chains" value="M=1-136"/>
</dbReference>
<dbReference type="PDB" id="6OST">
    <property type="method" value="EM"/>
    <property type="resolution" value="4.20 A"/>
    <property type="chains" value="M=1-136"/>
</dbReference>
<dbReference type="PDB" id="6OT3">
    <property type="method" value="EM"/>
    <property type="resolution" value="3.90 A"/>
    <property type="chains" value="M=1-136"/>
</dbReference>
<dbReference type="PDB" id="6OUO">
    <property type="method" value="EM"/>
    <property type="resolution" value="3.70 A"/>
    <property type="chains" value="M=1-136"/>
</dbReference>
<dbReference type="PDB" id="6PJ6">
    <property type="method" value="EM"/>
    <property type="resolution" value="2.20 A"/>
    <property type="chains" value="U=1-136"/>
</dbReference>
<dbReference type="PDB" id="6Q97">
    <property type="method" value="EM"/>
    <property type="resolution" value="3.90 A"/>
    <property type="chains" value="M=1-136"/>
</dbReference>
<dbReference type="PDB" id="6Q98">
    <property type="method" value="EM"/>
    <property type="resolution" value="4.30 A"/>
    <property type="chains" value="M=1-136"/>
</dbReference>
<dbReference type="PDB" id="6Q9A">
    <property type="method" value="EM"/>
    <property type="resolution" value="3.70 A"/>
    <property type="chains" value="M=1-135"/>
</dbReference>
<dbReference type="PDB" id="6QDW">
    <property type="method" value="EM"/>
    <property type="resolution" value="2.83 A"/>
    <property type="chains" value="m=1-136"/>
</dbReference>
<dbReference type="PDB" id="6QUL">
    <property type="method" value="EM"/>
    <property type="resolution" value="3.00 A"/>
    <property type="chains" value="N=1-136"/>
</dbReference>
<dbReference type="PDB" id="6S0K">
    <property type="method" value="EM"/>
    <property type="resolution" value="3.10 A"/>
    <property type="chains" value="N=1-136"/>
</dbReference>
<dbReference type="PDB" id="6SZS">
    <property type="method" value="EM"/>
    <property type="resolution" value="3.06 A"/>
    <property type="chains" value="M=1-136"/>
</dbReference>
<dbReference type="PDB" id="6TBV">
    <property type="method" value="EM"/>
    <property type="resolution" value="2.70 A"/>
    <property type="chains" value="L161=1-136"/>
</dbReference>
<dbReference type="PDB" id="6TC3">
    <property type="method" value="EM"/>
    <property type="resolution" value="2.70 A"/>
    <property type="chains" value="L161=1-136"/>
</dbReference>
<dbReference type="PDB" id="6U48">
    <property type="method" value="EM"/>
    <property type="resolution" value="2.87 A"/>
    <property type="chains" value="CN=1-136"/>
</dbReference>
<dbReference type="PDB" id="6VU3">
    <property type="method" value="EM"/>
    <property type="resolution" value="3.70 A"/>
    <property type="chains" value="v=1-136"/>
</dbReference>
<dbReference type="PDB" id="6VWL">
    <property type="method" value="EM"/>
    <property type="resolution" value="3.10 A"/>
    <property type="chains" value="K=1-136"/>
</dbReference>
<dbReference type="PDB" id="6VWM">
    <property type="method" value="EM"/>
    <property type="resolution" value="3.40 A"/>
    <property type="chains" value="K=1-136"/>
</dbReference>
<dbReference type="PDB" id="6VWN">
    <property type="method" value="EM"/>
    <property type="resolution" value="3.40 A"/>
    <property type="chains" value="K=1-136"/>
</dbReference>
<dbReference type="PDB" id="6VYQ">
    <property type="method" value="EM"/>
    <property type="resolution" value="3.70 A"/>
    <property type="chains" value="v=1-136"/>
</dbReference>
<dbReference type="PDB" id="6VYR">
    <property type="method" value="EM"/>
    <property type="resolution" value="3.80 A"/>
    <property type="chains" value="v=1-136"/>
</dbReference>
<dbReference type="PDB" id="6VYS">
    <property type="method" value="EM"/>
    <property type="resolution" value="3.70 A"/>
    <property type="chains" value="v=1-136"/>
</dbReference>
<dbReference type="PDB" id="6VYT">
    <property type="method" value="EM"/>
    <property type="resolution" value="14.00 A"/>
    <property type="chains" value="v=1-136"/>
</dbReference>
<dbReference type="PDB" id="6VYU">
    <property type="method" value="EM"/>
    <property type="resolution" value="7.00 A"/>
    <property type="chains" value="v=1-136"/>
</dbReference>
<dbReference type="PDB" id="6VYW">
    <property type="method" value="EM"/>
    <property type="resolution" value="7.00 A"/>
    <property type="chains" value="v=1-136"/>
</dbReference>
<dbReference type="PDB" id="6VYX">
    <property type="method" value="EM"/>
    <property type="resolution" value="9.90 A"/>
    <property type="chains" value="v=1-136"/>
</dbReference>
<dbReference type="PDB" id="6VYY">
    <property type="method" value="EM"/>
    <property type="resolution" value="9.90 A"/>
    <property type="chains" value="v=1-136"/>
</dbReference>
<dbReference type="PDB" id="6VYZ">
    <property type="method" value="EM"/>
    <property type="resolution" value="9.90 A"/>
    <property type="chains" value="v=1-136"/>
</dbReference>
<dbReference type="PDB" id="6VZ2">
    <property type="method" value="EM"/>
    <property type="resolution" value="10.00 A"/>
    <property type="chains" value="v=1-136"/>
</dbReference>
<dbReference type="PDB" id="6VZ3">
    <property type="method" value="EM"/>
    <property type="resolution" value="8.90 A"/>
    <property type="chains" value="v=1-136"/>
</dbReference>
<dbReference type="PDB" id="6VZ5">
    <property type="method" value="EM"/>
    <property type="resolution" value="8.90 A"/>
    <property type="chains" value="v=1-136"/>
</dbReference>
<dbReference type="PDB" id="6VZ7">
    <property type="method" value="EM"/>
    <property type="resolution" value="7.00 A"/>
    <property type="chains" value="v=1-136"/>
</dbReference>
<dbReference type="PDB" id="6VZJ">
    <property type="method" value="EM"/>
    <property type="resolution" value="4.10 A"/>
    <property type="chains" value="v=1-136"/>
</dbReference>
<dbReference type="PDB" id="6WD0">
    <property type="method" value="EM"/>
    <property type="resolution" value="3.00 A"/>
    <property type="chains" value="m=1-136"/>
</dbReference>
<dbReference type="PDB" id="6WD1">
    <property type="method" value="EM"/>
    <property type="resolution" value="3.30 A"/>
    <property type="chains" value="m=1-136"/>
</dbReference>
<dbReference type="PDB" id="6WD2">
    <property type="method" value="EM"/>
    <property type="resolution" value="3.60 A"/>
    <property type="chains" value="m=1-136"/>
</dbReference>
<dbReference type="PDB" id="6WD3">
    <property type="method" value="EM"/>
    <property type="resolution" value="3.60 A"/>
    <property type="chains" value="m=1-136"/>
</dbReference>
<dbReference type="PDB" id="6WD4">
    <property type="method" value="EM"/>
    <property type="resolution" value="3.70 A"/>
    <property type="chains" value="m=1-136"/>
</dbReference>
<dbReference type="PDB" id="6WD5">
    <property type="method" value="EM"/>
    <property type="resolution" value="3.60 A"/>
    <property type="chains" value="m=1-136"/>
</dbReference>
<dbReference type="PDB" id="6WD6">
    <property type="method" value="EM"/>
    <property type="resolution" value="3.70 A"/>
    <property type="chains" value="m=1-136"/>
</dbReference>
<dbReference type="PDB" id="6WD7">
    <property type="method" value="EM"/>
    <property type="resolution" value="3.90 A"/>
    <property type="chains" value="m=1-136"/>
</dbReference>
<dbReference type="PDB" id="6WD8">
    <property type="method" value="EM"/>
    <property type="resolution" value="3.70 A"/>
    <property type="chains" value="m=1-136"/>
</dbReference>
<dbReference type="PDB" id="6WD9">
    <property type="method" value="EM"/>
    <property type="resolution" value="3.70 A"/>
    <property type="chains" value="m=1-136"/>
</dbReference>
<dbReference type="PDB" id="6WDA">
    <property type="method" value="EM"/>
    <property type="resolution" value="3.80 A"/>
    <property type="chains" value="m=1-136"/>
</dbReference>
<dbReference type="PDB" id="6WDB">
    <property type="method" value="EM"/>
    <property type="resolution" value="4.00 A"/>
    <property type="chains" value="m=1-136"/>
</dbReference>
<dbReference type="PDB" id="6WDC">
    <property type="method" value="EM"/>
    <property type="resolution" value="4.20 A"/>
    <property type="chains" value="m=1-136"/>
</dbReference>
<dbReference type="PDB" id="6WDD">
    <property type="method" value="EM"/>
    <property type="resolution" value="3.20 A"/>
    <property type="chains" value="m=1-136"/>
</dbReference>
<dbReference type="PDB" id="6WDE">
    <property type="method" value="EM"/>
    <property type="resolution" value="3.00 A"/>
    <property type="chains" value="m=1-136"/>
</dbReference>
<dbReference type="PDB" id="6WDF">
    <property type="method" value="EM"/>
    <property type="resolution" value="3.30 A"/>
    <property type="chains" value="m=1-136"/>
</dbReference>
<dbReference type="PDB" id="6WDG">
    <property type="method" value="EM"/>
    <property type="resolution" value="3.30 A"/>
    <property type="chains" value="m=1-136"/>
</dbReference>
<dbReference type="PDB" id="6WDH">
    <property type="method" value="EM"/>
    <property type="resolution" value="4.30 A"/>
    <property type="chains" value="m=1-136"/>
</dbReference>
<dbReference type="PDB" id="6WDI">
    <property type="method" value="EM"/>
    <property type="resolution" value="4.00 A"/>
    <property type="chains" value="m=1-136"/>
</dbReference>
<dbReference type="PDB" id="6WDJ">
    <property type="method" value="EM"/>
    <property type="resolution" value="3.70 A"/>
    <property type="chains" value="m=1-136"/>
</dbReference>
<dbReference type="PDB" id="6WDK">
    <property type="method" value="EM"/>
    <property type="resolution" value="3.60 A"/>
    <property type="chains" value="m=1-136"/>
</dbReference>
<dbReference type="PDB" id="6WDL">
    <property type="method" value="EM"/>
    <property type="resolution" value="3.70 A"/>
    <property type="chains" value="m=1-136"/>
</dbReference>
<dbReference type="PDB" id="6WDM">
    <property type="method" value="EM"/>
    <property type="resolution" value="3.60 A"/>
    <property type="chains" value="m=1-136"/>
</dbReference>
<dbReference type="PDB" id="6WNW">
    <property type="method" value="EM"/>
    <property type="resolution" value="3.20 A"/>
    <property type="chains" value="m=1-136"/>
</dbReference>
<dbReference type="PDB" id="6X6T">
    <property type="method" value="EM"/>
    <property type="resolution" value="3.20 A"/>
    <property type="chains" value="v=1-136"/>
</dbReference>
<dbReference type="PDB" id="6X7F">
    <property type="method" value="EM"/>
    <property type="resolution" value="3.50 A"/>
    <property type="chains" value="v=1-136"/>
</dbReference>
<dbReference type="PDB" id="6X7K">
    <property type="method" value="EM"/>
    <property type="resolution" value="3.10 A"/>
    <property type="chains" value="v=1-136"/>
</dbReference>
<dbReference type="PDB" id="6X9Q">
    <property type="method" value="EM"/>
    <property type="resolution" value="4.80 A"/>
    <property type="chains" value="v=1-136"/>
</dbReference>
<dbReference type="PDB" id="6XDQ">
    <property type="method" value="EM"/>
    <property type="resolution" value="3.70 A"/>
    <property type="chains" value="v=1-136"/>
</dbReference>
<dbReference type="PDB" id="6XDR">
    <property type="method" value="EM"/>
    <property type="resolution" value="4.70 A"/>
    <property type="chains" value="v=1-136"/>
</dbReference>
<dbReference type="PDB" id="6XGF">
    <property type="method" value="EM"/>
    <property type="resolution" value="5.00 A"/>
    <property type="chains" value="v=1-136"/>
</dbReference>
<dbReference type="PDB" id="6XII">
    <property type="method" value="EM"/>
    <property type="resolution" value="7.00 A"/>
    <property type="chains" value="v=1-136"/>
</dbReference>
<dbReference type="PDB" id="6XIJ">
    <property type="method" value="EM"/>
    <property type="resolution" value="8.00 A"/>
    <property type="chains" value="v=1-136"/>
</dbReference>
<dbReference type="PDB" id="6XZ7">
    <property type="method" value="EM"/>
    <property type="resolution" value="2.10 A"/>
    <property type="chains" value="M=1-136"/>
</dbReference>
<dbReference type="PDB" id="6XZA">
    <property type="method" value="EM"/>
    <property type="resolution" value="2.66 A"/>
    <property type="chains" value="M2=1-136"/>
</dbReference>
<dbReference type="PDB" id="6XZB">
    <property type="method" value="EM"/>
    <property type="resolution" value="2.54 A"/>
    <property type="chains" value="M2=1-136"/>
</dbReference>
<dbReference type="PDB" id="6Y69">
    <property type="method" value="EM"/>
    <property type="resolution" value="2.86 A"/>
    <property type="chains" value="M=1-136"/>
</dbReference>
<dbReference type="PDB" id="6YSR">
    <property type="method" value="EM"/>
    <property type="resolution" value="3.10 A"/>
    <property type="chains" value="M=1-136"/>
</dbReference>
<dbReference type="PDB" id="6YSS">
    <property type="method" value="EM"/>
    <property type="resolution" value="2.60 A"/>
    <property type="chains" value="M=1-136"/>
</dbReference>
<dbReference type="PDB" id="6YST">
    <property type="method" value="EM"/>
    <property type="resolution" value="3.20 A"/>
    <property type="chains" value="M=1-136"/>
</dbReference>
<dbReference type="PDB" id="6YSU">
    <property type="method" value="EM"/>
    <property type="resolution" value="3.70 A"/>
    <property type="chains" value="M=1-136"/>
</dbReference>
<dbReference type="PDB" id="6ZTJ">
    <property type="method" value="EM"/>
    <property type="resolution" value="3.40 A"/>
    <property type="chains" value="BN=1-136"/>
</dbReference>
<dbReference type="PDB" id="6ZTL">
    <property type="method" value="EM"/>
    <property type="resolution" value="3.50 A"/>
    <property type="chains" value="BN=1-136"/>
</dbReference>
<dbReference type="PDB" id="6ZTM">
    <property type="method" value="EM"/>
    <property type="resolution" value="3.30 A"/>
    <property type="chains" value="BN=1-136"/>
</dbReference>
<dbReference type="PDB" id="6ZTN">
    <property type="method" value="EM"/>
    <property type="resolution" value="3.90 A"/>
    <property type="chains" value="BN=1-136"/>
</dbReference>
<dbReference type="PDB" id="6ZTO">
    <property type="method" value="EM"/>
    <property type="resolution" value="3.00 A"/>
    <property type="chains" value="BN=1-136"/>
</dbReference>
<dbReference type="PDB" id="6ZTP">
    <property type="method" value="EM"/>
    <property type="resolution" value="3.00 A"/>
    <property type="chains" value="BN=1-136"/>
</dbReference>
<dbReference type="PDB" id="6ZU1">
    <property type="method" value="EM"/>
    <property type="resolution" value="3.00 A"/>
    <property type="chains" value="BN=1-136"/>
</dbReference>
<dbReference type="PDB" id="7ABZ">
    <property type="method" value="EM"/>
    <property type="resolution" value="3.21 A"/>
    <property type="chains" value="M=1-136"/>
</dbReference>
<dbReference type="PDB" id="7AC7">
    <property type="method" value="EM"/>
    <property type="resolution" value="3.08 A"/>
    <property type="chains" value="M=1-136"/>
</dbReference>
<dbReference type="PDB" id="7ACJ">
    <property type="method" value="EM"/>
    <property type="resolution" value="3.20 A"/>
    <property type="chains" value="M=1-136"/>
</dbReference>
<dbReference type="PDB" id="7ACR">
    <property type="method" value="EM"/>
    <property type="resolution" value="3.44 A"/>
    <property type="chains" value="M=1-136"/>
</dbReference>
<dbReference type="PDB" id="7B5K">
    <property type="method" value="EM"/>
    <property type="resolution" value="2.90 A"/>
    <property type="chains" value="M=1-136"/>
</dbReference>
<dbReference type="PDB" id="7BL4">
    <property type="method" value="EM"/>
    <property type="resolution" value="2.40 A"/>
    <property type="chains" value="M=1-136"/>
</dbReference>
<dbReference type="PDB" id="7BL5">
    <property type="method" value="EM"/>
    <property type="resolution" value="3.30 A"/>
    <property type="chains" value="M=1-136"/>
</dbReference>
<dbReference type="PDB" id="7BL6">
    <property type="method" value="EM"/>
    <property type="resolution" value="4.00 A"/>
    <property type="chains" value="M=1-136"/>
</dbReference>
<dbReference type="PDB" id="7BV8">
    <property type="method" value="EM"/>
    <property type="resolution" value="3.14 A"/>
    <property type="chains" value="N=1-136"/>
</dbReference>
<dbReference type="PDB" id="7D6Z">
    <property type="method" value="EM"/>
    <property type="resolution" value="3.40 A"/>
    <property type="chains" value="M=1-136"/>
</dbReference>
<dbReference type="PDB" id="7D80">
    <property type="method" value="EM"/>
    <property type="resolution" value="4.10 A"/>
    <property type="chains" value="l=1-136"/>
</dbReference>
<dbReference type="PDB" id="7JSS">
    <property type="method" value="EM"/>
    <property type="resolution" value="3.70 A"/>
    <property type="chains" value="m=1-136"/>
</dbReference>
<dbReference type="PDB" id="7JSW">
    <property type="method" value="EM"/>
    <property type="resolution" value="3.80 A"/>
    <property type="chains" value="m=1-136"/>
</dbReference>
<dbReference type="PDB" id="7JSZ">
    <property type="method" value="EM"/>
    <property type="resolution" value="3.70 A"/>
    <property type="chains" value="m=1-136"/>
</dbReference>
<dbReference type="PDB" id="7JT1">
    <property type="method" value="EM"/>
    <property type="resolution" value="3.30 A"/>
    <property type="chains" value="m=1-136"/>
</dbReference>
<dbReference type="PDB" id="7JT2">
    <property type="method" value="EM"/>
    <property type="resolution" value="3.50 A"/>
    <property type="chains" value="m=1-136"/>
</dbReference>
<dbReference type="PDB" id="7JT3">
    <property type="method" value="EM"/>
    <property type="resolution" value="3.70 A"/>
    <property type="chains" value="m=1-136"/>
</dbReference>
<dbReference type="PDB" id="7K00">
    <property type="method" value="EM"/>
    <property type="resolution" value="1.98 A"/>
    <property type="chains" value="l=1-136"/>
</dbReference>
<dbReference type="PDB" id="7K50">
    <property type="method" value="EM"/>
    <property type="resolution" value="3.40 A"/>
    <property type="chains" value="m=1-136"/>
</dbReference>
<dbReference type="PDB" id="7K51">
    <property type="method" value="EM"/>
    <property type="resolution" value="3.50 A"/>
    <property type="chains" value="m=1-136"/>
</dbReference>
<dbReference type="PDB" id="7K52">
    <property type="method" value="EM"/>
    <property type="resolution" value="3.40 A"/>
    <property type="chains" value="m=1-136"/>
</dbReference>
<dbReference type="PDB" id="7K53">
    <property type="method" value="EM"/>
    <property type="resolution" value="3.20 A"/>
    <property type="chains" value="m=1-136"/>
</dbReference>
<dbReference type="PDB" id="7K54">
    <property type="method" value="EM"/>
    <property type="resolution" value="3.20 A"/>
    <property type="chains" value="m=1-136"/>
</dbReference>
<dbReference type="PDB" id="7K55">
    <property type="method" value="EM"/>
    <property type="resolution" value="3.30 A"/>
    <property type="chains" value="m=1-136"/>
</dbReference>
<dbReference type="PDB" id="7LV0">
    <property type="method" value="EM"/>
    <property type="resolution" value="3.20 A"/>
    <property type="chains" value="m=1-136"/>
</dbReference>
<dbReference type="PDB" id="7LVK">
    <property type="method" value="EM"/>
    <property type="resolution" value="2.20 A"/>
    <property type="chains" value="U=1-136"/>
</dbReference>
<dbReference type="PDB" id="7M5D">
    <property type="method" value="EM"/>
    <property type="resolution" value="2.80 A"/>
    <property type="chains" value="M=1-136"/>
</dbReference>
<dbReference type="PDB" id="7N1P">
    <property type="method" value="EM"/>
    <property type="resolution" value="2.33 A"/>
    <property type="chains" value="LP=1-136"/>
</dbReference>
<dbReference type="PDB" id="7N2C">
    <property type="method" value="EM"/>
    <property type="resolution" value="2.72 A"/>
    <property type="chains" value="LP=1-136"/>
</dbReference>
<dbReference type="PDB" id="7N2U">
    <property type="method" value="EM"/>
    <property type="resolution" value="2.53 A"/>
    <property type="chains" value="LP=1-136"/>
</dbReference>
<dbReference type="PDB" id="7N2V">
    <property type="method" value="EM"/>
    <property type="resolution" value="2.54 A"/>
    <property type="chains" value="LP=1-136"/>
</dbReference>
<dbReference type="PDB" id="7N30">
    <property type="method" value="EM"/>
    <property type="resolution" value="2.66 A"/>
    <property type="chains" value="LP=1-136"/>
</dbReference>
<dbReference type="PDB" id="7N31">
    <property type="method" value="EM"/>
    <property type="resolution" value="2.69 A"/>
    <property type="chains" value="LP=1-136"/>
</dbReference>
<dbReference type="PDB" id="7NBU">
    <property type="method" value="EM"/>
    <property type="resolution" value="3.11 A"/>
    <property type="chains" value="l=1-136"/>
</dbReference>
<dbReference type="PDB" id="7NSO">
    <property type="method" value="EM"/>
    <property type="resolution" value="2.90 A"/>
    <property type="chains" value="M=1-136"/>
</dbReference>
<dbReference type="PDB" id="7NSP">
    <property type="method" value="EM"/>
    <property type="resolution" value="3.50 A"/>
    <property type="chains" value="M=1-136"/>
</dbReference>
<dbReference type="PDB" id="7NSQ">
    <property type="method" value="EM"/>
    <property type="resolution" value="3.10 A"/>
    <property type="chains" value="M=1-136"/>
</dbReference>
<dbReference type="PDB" id="7NWT">
    <property type="method" value="EM"/>
    <property type="resolution" value="2.66 A"/>
    <property type="chains" value="M=1-136"/>
</dbReference>
<dbReference type="PDB" id="7NWW">
    <property type="method" value="EM"/>
    <property type="resolution" value="3.05 A"/>
    <property type="chains" value="L=1-136"/>
</dbReference>
<dbReference type="PDB" id="7O19">
    <property type="method" value="EM"/>
    <property type="resolution" value="2.90 A"/>
    <property type="chains" value="BM=1-136"/>
</dbReference>
<dbReference type="PDB" id="7O1A">
    <property type="method" value="EM"/>
    <property type="resolution" value="2.40 A"/>
    <property type="chains" value="BM=1-136"/>
</dbReference>
<dbReference type="PDB" id="7O1C">
    <property type="method" value="EM"/>
    <property type="resolution" value="2.60 A"/>
    <property type="chains" value="BM=1-136"/>
</dbReference>
<dbReference type="PDB" id="7OIF">
    <property type="method" value="EM"/>
    <property type="resolution" value="3.00 A"/>
    <property type="chains" value="L=1-136"/>
</dbReference>
<dbReference type="PDB" id="7OIG">
    <property type="method" value="EM"/>
    <property type="resolution" value="3.20 A"/>
    <property type="chains" value="L=1-136"/>
</dbReference>
<dbReference type="PDB" id="7OII">
    <property type="method" value="EM"/>
    <property type="resolution" value="3.00 A"/>
    <property type="chains" value="L=1-136"/>
</dbReference>
<dbReference type="PDB" id="7OIZ">
    <property type="method" value="EM"/>
    <property type="resolution" value="2.90 A"/>
    <property type="chains" value="l=1-136"/>
</dbReference>
<dbReference type="PDB" id="7OJ0">
    <property type="method" value="EM"/>
    <property type="resolution" value="3.50 A"/>
    <property type="chains" value="l=1-136"/>
</dbReference>
<dbReference type="PDB" id="7OT5">
    <property type="method" value="EM"/>
    <property type="resolution" value="2.90 A"/>
    <property type="chains" value="L=1-136"/>
</dbReference>
<dbReference type="PDB" id="7P3K">
    <property type="method" value="EM"/>
    <property type="resolution" value="2.90 A"/>
    <property type="chains" value="l=1-136"/>
</dbReference>
<dbReference type="PDB" id="7PJS">
    <property type="method" value="EM"/>
    <property type="resolution" value="2.35 A"/>
    <property type="chains" value="M=1-136"/>
</dbReference>
<dbReference type="PDB" id="7PJT">
    <property type="method" value="EM"/>
    <property type="resolution" value="6.00 A"/>
    <property type="chains" value="M=1-136"/>
</dbReference>
<dbReference type="PDB" id="7PJU">
    <property type="method" value="EM"/>
    <property type="resolution" value="9.50 A"/>
    <property type="chains" value="M=1-136"/>
</dbReference>
<dbReference type="PDB" id="7PJV">
    <property type="method" value="EM"/>
    <property type="resolution" value="3.10 A"/>
    <property type="chains" value="M=1-136"/>
</dbReference>
<dbReference type="PDB" id="7PJW">
    <property type="method" value="EM"/>
    <property type="resolution" value="4.00 A"/>
    <property type="chains" value="M=1-136"/>
</dbReference>
<dbReference type="PDB" id="7PJX">
    <property type="method" value="EM"/>
    <property type="resolution" value="6.50 A"/>
    <property type="chains" value="M=1-136"/>
</dbReference>
<dbReference type="PDB" id="7PJY">
    <property type="method" value="EM"/>
    <property type="resolution" value="3.10 A"/>
    <property type="chains" value="M=1-136"/>
</dbReference>
<dbReference type="PDB" id="7PJZ">
    <property type="method" value="EM"/>
    <property type="resolution" value="6.00 A"/>
    <property type="chains" value="M=1-136"/>
</dbReference>
<dbReference type="PDB" id="7Q4K">
    <property type="method" value="EM"/>
    <property type="resolution" value="3.00 A"/>
    <property type="chains" value="BM=1-136"/>
</dbReference>
<dbReference type="PDB" id="7QG8">
    <property type="method" value="EM"/>
    <property type="resolution" value="3.97 A"/>
    <property type="chains" value="Z=1-136"/>
</dbReference>
<dbReference type="PDB" id="7QGN">
    <property type="method" value="EM"/>
    <property type="resolution" value="3.37 A"/>
    <property type="chains" value="Z=1-136"/>
</dbReference>
<dbReference type="PDB" id="7QGR">
    <property type="method" value="EM"/>
    <property type="resolution" value="5.70 A"/>
    <property type="chains" value="Z=1-136"/>
</dbReference>
<dbReference type="PDB" id="7QQ3">
    <property type="method" value="EM"/>
    <property type="resolution" value="2.10 A"/>
    <property type="chains" value="U=1-136"/>
</dbReference>
<dbReference type="PDB" id="7S1G">
    <property type="method" value="EM"/>
    <property type="resolution" value="2.48 A"/>
    <property type="chains" value="U=1-136"/>
</dbReference>
<dbReference type="PDB" id="7S1H">
    <property type="method" value="EM"/>
    <property type="resolution" value="2.35 A"/>
    <property type="chains" value="U=1-136"/>
</dbReference>
<dbReference type="PDB" id="7S1I">
    <property type="method" value="EM"/>
    <property type="resolution" value="2.48 A"/>
    <property type="chains" value="U=1-136"/>
</dbReference>
<dbReference type="PDB" id="7S1J">
    <property type="method" value="EM"/>
    <property type="resolution" value="2.47 A"/>
    <property type="chains" value="U=1-136"/>
</dbReference>
<dbReference type="PDB" id="7S1K">
    <property type="method" value="EM"/>
    <property type="resolution" value="2.42 A"/>
    <property type="chains" value="U=1-136"/>
</dbReference>
<dbReference type="PDB" id="7SA4">
    <property type="method" value="EM"/>
    <property type="resolution" value="2.55 A"/>
    <property type="chains" value="M=1-136"/>
</dbReference>
<dbReference type="PDB" id="7SS9">
    <property type="method" value="EM"/>
    <property type="resolution" value="3.90 A"/>
    <property type="chains" value="m=1-136"/>
</dbReference>
<dbReference type="PDB" id="7SSD">
    <property type="method" value="EM"/>
    <property type="resolution" value="3.30 A"/>
    <property type="chains" value="m=1-136"/>
</dbReference>
<dbReference type="PDB" id="7SSL">
    <property type="method" value="EM"/>
    <property type="resolution" value="3.80 A"/>
    <property type="chains" value="m=1-136"/>
</dbReference>
<dbReference type="PDB" id="7SSN">
    <property type="method" value="EM"/>
    <property type="resolution" value="3.20 A"/>
    <property type="chains" value="m=1-136"/>
</dbReference>
<dbReference type="PDB" id="7SSO">
    <property type="method" value="EM"/>
    <property type="resolution" value="3.20 A"/>
    <property type="chains" value="m=1-136"/>
</dbReference>
<dbReference type="PDB" id="7SSW">
    <property type="method" value="EM"/>
    <property type="resolution" value="3.80 A"/>
    <property type="chains" value="m=1-136"/>
</dbReference>
<dbReference type="PDB" id="7ST2">
    <property type="method" value="EM"/>
    <property type="resolution" value="2.90 A"/>
    <property type="chains" value="m=1-136"/>
</dbReference>
<dbReference type="PDB" id="7ST6">
    <property type="method" value="EM"/>
    <property type="resolution" value="3.00 A"/>
    <property type="chains" value="m=1-136"/>
</dbReference>
<dbReference type="PDB" id="7ST7">
    <property type="method" value="EM"/>
    <property type="resolution" value="3.20 A"/>
    <property type="chains" value="m=1-136"/>
</dbReference>
<dbReference type="PDB" id="7TOS">
    <property type="method" value="EM"/>
    <property type="resolution" value="2.90 A"/>
    <property type="chains" value="L16=1-136"/>
</dbReference>
<dbReference type="PDB" id="7UG7">
    <property type="method" value="EM"/>
    <property type="resolution" value="2.58 A"/>
    <property type="chains" value="LP=1-136"/>
</dbReference>
<dbReference type="PDB" id="7UPH">
    <property type="method" value="EM"/>
    <property type="resolution" value="4.18 A"/>
    <property type="chains" value="U=1-136"/>
</dbReference>
<dbReference type="PDB" id="7Y7C">
    <property type="method" value="EM"/>
    <property type="resolution" value="2.51 A"/>
    <property type="chains" value="l=1-136"/>
</dbReference>
<dbReference type="PDB" id="7Y7D">
    <property type="method" value="EM"/>
    <property type="resolution" value="2.58 A"/>
    <property type="chains" value="l=1-136"/>
</dbReference>
<dbReference type="PDB" id="7Y7E">
    <property type="method" value="EM"/>
    <property type="resolution" value="2.41 A"/>
    <property type="chains" value="l=1-136"/>
</dbReference>
<dbReference type="PDB" id="7Y7F">
    <property type="method" value="EM"/>
    <property type="resolution" value="2.43 A"/>
    <property type="chains" value="l=1-136"/>
</dbReference>
<dbReference type="PDB" id="7Y7G">
    <property type="method" value="EM"/>
    <property type="resolution" value="2.34 A"/>
    <property type="chains" value="l=1-136"/>
</dbReference>
<dbReference type="PDB" id="7Y7H">
    <property type="method" value="EM"/>
    <property type="resolution" value="2.51 A"/>
    <property type="chains" value="l=1-136"/>
</dbReference>
<dbReference type="PDB" id="7YLA">
    <property type="method" value="EM"/>
    <property type="resolution" value="2.52 A"/>
    <property type="chains" value="U=1-136"/>
</dbReference>
<dbReference type="PDB" id="7Z20">
    <property type="method" value="EM"/>
    <property type="resolution" value="2.29 A"/>
    <property type="chains" value="m=1-136"/>
</dbReference>
<dbReference type="PDB" id="7ZOD">
    <property type="method" value="EM"/>
    <property type="resolution" value="2.56 A"/>
    <property type="chains" value="m=1-136"/>
</dbReference>
<dbReference type="PDB" id="7ZP8">
    <property type="method" value="EM"/>
    <property type="resolution" value="2.20 A"/>
    <property type="chains" value="m=1-136"/>
</dbReference>
<dbReference type="PDB" id="7ZQ5">
    <property type="method" value="EM"/>
    <property type="resolution" value="2.70 A"/>
    <property type="chains" value="m=1-136"/>
</dbReference>
<dbReference type="PDB" id="7ZQ6">
    <property type="method" value="EM"/>
    <property type="resolution" value="2.75 A"/>
    <property type="chains" value="m=1-136"/>
</dbReference>
<dbReference type="PDB" id="7ZTA">
    <property type="method" value="EM"/>
    <property type="resolution" value="2.70 A"/>
    <property type="chains" value="L161=1-136"/>
</dbReference>
<dbReference type="PDB" id="8A3L">
    <property type="method" value="EM"/>
    <property type="resolution" value="3.42 A"/>
    <property type="chains" value="l=1-136"/>
</dbReference>
<dbReference type="PDB" id="8AKN">
    <property type="method" value="EM"/>
    <property type="resolution" value="2.30 A"/>
    <property type="chains" value="l=1-136"/>
</dbReference>
<dbReference type="PDB" id="8AM9">
    <property type="method" value="EM"/>
    <property type="resolution" value="2.80 A"/>
    <property type="chains" value="l=1-136"/>
</dbReference>
<dbReference type="PDB" id="8ANA">
    <property type="method" value="EM"/>
    <property type="resolution" value="2.10 A"/>
    <property type="chains" value="l=1-136"/>
</dbReference>
<dbReference type="PDB" id="8AP4">
    <property type="method" value="EM"/>
    <property type="resolution" value="3.00 A"/>
    <property type="chains" value="l=1-136"/>
</dbReference>
<dbReference type="PDB" id="8AYE">
    <property type="method" value="EM"/>
    <property type="resolution" value="1.96 A"/>
    <property type="chains" value="l=1-136"/>
</dbReference>
<dbReference type="PDB" id="8B0X">
    <property type="method" value="EM"/>
    <property type="resolution" value="1.55 A"/>
    <property type="chains" value="l=1-136"/>
</dbReference>
<dbReference type="PDB" id="8B7Y">
    <property type="method" value="EM"/>
    <property type="resolution" value="3.00 A"/>
    <property type="chains" value="U=1-136"/>
</dbReference>
<dbReference type="PDB" id="8BF7">
    <property type="method" value="EM"/>
    <property type="resolution" value="2.33 A"/>
    <property type="chains" value="J=1-136"/>
</dbReference>
<dbReference type="PDB" id="8BGE">
    <property type="method" value="EM"/>
    <property type="resolution" value="2.11 A"/>
    <property type="chains" value="J=1-136"/>
</dbReference>
<dbReference type="PDB" id="8BGH">
    <property type="method" value="EM"/>
    <property type="resolution" value="2.88 A"/>
    <property type="chains" value="J=1-136"/>
</dbReference>
<dbReference type="PDB" id="8BH4">
    <property type="method" value="EM"/>
    <property type="resolution" value="2.62 A"/>
    <property type="chains" value="J=1-136"/>
</dbReference>
<dbReference type="PDB" id="8BHJ">
    <property type="method" value="EM"/>
    <property type="resolution" value="2.81 A"/>
    <property type="chains" value="J=1-136"/>
</dbReference>
<dbReference type="PDB" id="8BHL">
    <property type="method" value="EM"/>
    <property type="resolution" value="2.21 A"/>
    <property type="chains" value="J=1-136"/>
</dbReference>
<dbReference type="PDB" id="8BHN">
    <property type="method" value="EM"/>
    <property type="resolution" value="2.85 A"/>
    <property type="chains" value="J=1-136"/>
</dbReference>
<dbReference type="PDB" id="8BHP">
    <property type="method" value="EM"/>
    <property type="resolution" value="2.37 A"/>
    <property type="chains" value="J=1-136"/>
</dbReference>
<dbReference type="PDB" id="8BIL">
    <property type="method" value="EM"/>
    <property type="resolution" value="2.04 A"/>
    <property type="chains" value="J=1-136"/>
</dbReference>
<dbReference type="PDB" id="8BIM">
    <property type="method" value="EM"/>
    <property type="resolution" value="2.04 A"/>
    <property type="chains" value="J=1-136"/>
</dbReference>
<dbReference type="PDB" id="8C8X">
    <property type="method" value="EM"/>
    <property type="resolution" value="3.93 A"/>
    <property type="chains" value="M=1-136"/>
</dbReference>
<dbReference type="PDB" id="8CAM">
    <property type="method" value="EM"/>
    <property type="resolution" value="1.86 A"/>
    <property type="chains" value="l=1-136"/>
</dbReference>
<dbReference type="PDB" id="8CEU">
    <property type="method" value="EM"/>
    <property type="resolution" value="1.83 A"/>
    <property type="chains" value="l=1-136"/>
</dbReference>
<dbReference type="PDB" id="8CGD">
    <property type="method" value="EM"/>
    <property type="resolution" value="1.98 A"/>
    <property type="chains" value="l=1-136"/>
</dbReference>
<dbReference type="PDB" id="8CGK">
    <property type="method" value="EM"/>
    <property type="resolution" value="1.64 A"/>
    <property type="chains" value="l=1-136"/>
</dbReference>
<dbReference type="PDB" id="8CGV">
    <property type="method" value="EM"/>
    <property type="resolution" value="1.66 A"/>
    <property type="chains" value="l=1-136"/>
</dbReference>
<dbReference type="PDB" id="8EIU">
    <property type="method" value="EM"/>
    <property type="resolution" value="2.24 A"/>
    <property type="chains" value="l=1-136"/>
</dbReference>
<dbReference type="PDB" id="8EKC">
    <property type="method" value="EM"/>
    <property type="resolution" value="2.70 A"/>
    <property type="chains" value="O=1-136"/>
</dbReference>
<dbReference type="PDB" id="8EMM">
    <property type="method" value="EM"/>
    <property type="resolution" value="2.10 A"/>
    <property type="chains" value="l=1-136"/>
</dbReference>
<dbReference type="PDB" id="8FIZ">
    <property type="method" value="EM"/>
    <property type="resolution" value="3.80 A"/>
    <property type="chains" value="BU=1-136"/>
</dbReference>
<dbReference type="PDB" id="8FTO">
    <property type="method" value="EM"/>
    <property type="resolution" value="1.85 A"/>
    <property type="chains" value="l=1-136"/>
</dbReference>
<dbReference type="PDB" id="8FZD">
    <property type="method" value="EM"/>
    <property type="resolution" value="3.10 A"/>
    <property type="chains" value="O=1-136"/>
</dbReference>
<dbReference type="PDB" id="8FZE">
    <property type="method" value="EM"/>
    <property type="resolution" value="3.00 A"/>
    <property type="chains" value="O=1-136"/>
</dbReference>
<dbReference type="PDB" id="8FZF">
    <property type="method" value="EM"/>
    <property type="resolution" value="3.20 A"/>
    <property type="chains" value="O=1-136"/>
</dbReference>
<dbReference type="PDB" id="8FZG">
    <property type="method" value="EM"/>
    <property type="resolution" value="3.10 A"/>
    <property type="chains" value="O=1-136"/>
</dbReference>
<dbReference type="PDB" id="8FZH">
    <property type="method" value="EM"/>
    <property type="resolution" value="2.90 A"/>
    <property type="chains" value="O=1-136"/>
</dbReference>
<dbReference type="PDB" id="8FZI">
    <property type="method" value="EM"/>
    <property type="resolution" value="3.10 A"/>
    <property type="chains" value="O=1-136"/>
</dbReference>
<dbReference type="PDB" id="8FZJ">
    <property type="method" value="EM"/>
    <property type="resolution" value="3.00 A"/>
    <property type="chains" value="O=1-136"/>
</dbReference>
<dbReference type="PDB" id="8G2U">
    <property type="method" value="EM"/>
    <property type="resolution" value="3.00 A"/>
    <property type="chains" value="M=1-136"/>
</dbReference>
<dbReference type="PDB" id="8G31">
    <property type="method" value="EM"/>
    <property type="resolution" value="3.20 A"/>
    <property type="chains" value="M=1-136"/>
</dbReference>
<dbReference type="PDB" id="8G34">
    <property type="method" value="EM"/>
    <property type="resolution" value="3.20 A"/>
    <property type="chains" value="M=1-136"/>
</dbReference>
<dbReference type="PDB" id="8G38">
    <property type="method" value="EM"/>
    <property type="resolution" value="3.20 A"/>
    <property type="chains" value="M=1-136"/>
</dbReference>
<dbReference type="PDB" id="8G6W">
    <property type="method" value="EM"/>
    <property type="resolution" value="2.02 A"/>
    <property type="chains" value="l=1-136"/>
</dbReference>
<dbReference type="PDB" id="8G6X">
    <property type="method" value="EM"/>
    <property type="resolution" value="2.31 A"/>
    <property type="chains" value="l=1-136"/>
</dbReference>
<dbReference type="PDB" id="8G6Y">
    <property type="method" value="EM"/>
    <property type="resolution" value="2.09 A"/>
    <property type="chains" value="l=1-136"/>
</dbReference>
<dbReference type="PDB" id="8G7P">
    <property type="method" value="EM"/>
    <property type="resolution" value="2.90 A"/>
    <property type="chains" value="O=1-136"/>
</dbReference>
<dbReference type="PDB" id="8G7Q">
    <property type="method" value="EM"/>
    <property type="resolution" value="3.10 A"/>
    <property type="chains" value="O=1-136"/>
</dbReference>
<dbReference type="PDB" id="8G7R">
    <property type="method" value="EM"/>
    <property type="resolution" value="2.80 A"/>
    <property type="chains" value="O=1-136"/>
</dbReference>
<dbReference type="PDB" id="8G7S">
    <property type="method" value="EM"/>
    <property type="resolution" value="3.10 A"/>
    <property type="chains" value="O=1-136"/>
</dbReference>
<dbReference type="PDB" id="8HSP">
    <property type="method" value="EM"/>
    <property type="resolution" value="2.32 A"/>
    <property type="chains" value="l=1-136"/>
</dbReference>
<dbReference type="PDB" id="8HTZ">
    <property type="method" value="EM"/>
    <property type="resolution" value="2.40 A"/>
    <property type="chains" value="l=1-136"/>
</dbReference>
<dbReference type="PDB" id="8HU1">
    <property type="method" value="EM"/>
    <property type="resolution" value="2.69 A"/>
    <property type="chains" value="l=1-136"/>
</dbReference>
<dbReference type="PDB" id="8IFB">
    <property type="method" value="EM"/>
    <property type="resolution" value="2.43 A"/>
    <property type="chains" value="l=1-136"/>
</dbReference>
<dbReference type="PDB" id="8IFC">
    <property type="method" value="EM"/>
    <property type="resolution" value="2.90 A"/>
    <property type="chains" value="l=1-136"/>
</dbReference>
<dbReference type="PDB" id="8P16">
    <property type="method" value="EM"/>
    <property type="resolution" value="2.77 A"/>
    <property type="chains" value="M=1-136"/>
</dbReference>
<dbReference type="PDB" id="8P17">
    <property type="method" value="EM"/>
    <property type="resolution" value="2.78 A"/>
    <property type="chains" value="M=1-136"/>
</dbReference>
<dbReference type="PDB" id="8P18">
    <property type="method" value="EM"/>
    <property type="resolution" value="2.77 A"/>
    <property type="chains" value="M=1-136"/>
</dbReference>
<dbReference type="PDB" id="8PEG">
    <property type="method" value="EM"/>
    <property type="resolution" value="3.30 A"/>
    <property type="chains" value="h=1-136"/>
</dbReference>
<dbReference type="PDB" id="8PHJ">
    <property type="method" value="EM"/>
    <property type="resolution" value="3.67 A"/>
    <property type="chains" value="l=1-136"/>
</dbReference>
<dbReference type="PDB" id="8PKL">
    <property type="method" value="EM"/>
    <property type="resolution" value="3.09 A"/>
    <property type="chains" value="h=1-136"/>
</dbReference>
<dbReference type="PDB" id="8PVA">
    <property type="method" value="EM"/>
    <property type="resolution" value="4.50 A"/>
    <property type="chains" value="l=1-136"/>
</dbReference>
<dbReference type="PDB" id="8Q4F">
    <property type="method" value="EM"/>
    <property type="resolution" value="3.10 A"/>
    <property type="chains" value="l=1-136"/>
</dbReference>
<dbReference type="PDB" id="8QBT">
    <property type="method" value="EM"/>
    <property type="resolution" value="2.20 A"/>
    <property type="chains" value="M=1-136"/>
</dbReference>
<dbReference type="PDB" id="8QK7">
    <property type="method" value="EM"/>
    <property type="resolution" value="2.77 A"/>
    <property type="chains" value="M=1-136"/>
</dbReference>
<dbReference type="PDB" id="8QOA">
    <property type="method" value="EM"/>
    <property type="resolution" value="2.00 A"/>
    <property type="chains" value="l=1-136"/>
</dbReference>
<dbReference type="PDB" id="8R3V">
    <property type="method" value="EM"/>
    <property type="resolution" value="3.28 A"/>
    <property type="chains" value="h2=1-136"/>
</dbReference>
<dbReference type="PDB" id="8R6C">
    <property type="method" value="EM"/>
    <property type="resolution" value="2.20 A"/>
    <property type="chains" value="l=1-136"/>
</dbReference>
<dbReference type="PDB" id="8R8M">
    <property type="method" value="EM"/>
    <property type="resolution" value="2.40 A"/>
    <property type="chains" value="l=1-136"/>
</dbReference>
<dbReference type="PDB" id="8RCL">
    <property type="method" value="EM"/>
    <property type="resolution" value="3.49 A"/>
    <property type="chains" value="h2=1-136"/>
</dbReference>
<dbReference type="PDB" id="8RCM">
    <property type="method" value="EM"/>
    <property type="resolution" value="3.59 A"/>
    <property type="chains" value="h2=1-136"/>
</dbReference>
<dbReference type="PDB" id="8RCS">
    <property type="method" value="EM"/>
    <property type="resolution" value="4.46 A"/>
    <property type="chains" value="h2=1-136"/>
</dbReference>
<dbReference type="PDB" id="8RCT">
    <property type="method" value="EM"/>
    <property type="resolution" value="5.32 A"/>
    <property type="chains" value="h2=1-136"/>
</dbReference>
<dbReference type="PDB" id="8RPY">
    <property type="method" value="EM"/>
    <property type="resolution" value="2.64 A"/>
    <property type="chains" value="M=1-136"/>
</dbReference>
<dbReference type="PDB" id="8RPZ">
    <property type="method" value="EM"/>
    <property type="resolution" value="2.44 A"/>
    <property type="chains" value="M=1-136"/>
</dbReference>
<dbReference type="PDB" id="8RQ0">
    <property type="method" value="EM"/>
    <property type="resolution" value="2.44 A"/>
    <property type="chains" value="M=1-136"/>
</dbReference>
<dbReference type="PDB" id="8RQ2">
    <property type="method" value="EM"/>
    <property type="resolution" value="2.44 A"/>
    <property type="chains" value="M=1-136"/>
</dbReference>
<dbReference type="PDB" id="8SYL">
    <property type="method" value="EM"/>
    <property type="resolution" value="2.90 A"/>
    <property type="chains" value="O=1-136"/>
</dbReference>
<dbReference type="PDB" id="8T5D">
    <property type="method" value="EM"/>
    <property type="resolution" value="3.20 A"/>
    <property type="chains" value="M=1-136"/>
</dbReference>
<dbReference type="PDB" id="8T5H">
    <property type="method" value="EM"/>
    <property type="resolution" value="3.30 A"/>
    <property type="chains" value="M=1-136"/>
</dbReference>
<dbReference type="PDB" id="8UPO">
    <property type="method" value="EM"/>
    <property type="resolution" value="5.50 A"/>
    <property type="chains" value="v=1-136"/>
</dbReference>
<dbReference type="PDB" id="8UPR">
    <property type="method" value="EM"/>
    <property type="resolution" value="5.30 A"/>
    <property type="chains" value="v=1-136"/>
</dbReference>
<dbReference type="PDB" id="8UQL">
    <property type="method" value="EM"/>
    <property type="resolution" value="3.20 A"/>
    <property type="chains" value="v=1-136"/>
</dbReference>
<dbReference type="PDB" id="8UQM">
    <property type="method" value="EM"/>
    <property type="resolution" value="5.30 A"/>
    <property type="chains" value="v=1-136"/>
</dbReference>
<dbReference type="PDB" id="8UQP">
    <property type="method" value="EM"/>
    <property type="resolution" value="3.80 A"/>
    <property type="chains" value="v=1-136"/>
</dbReference>
<dbReference type="PDB" id="8UR0">
    <property type="method" value="EM"/>
    <property type="resolution" value="3.40 A"/>
    <property type="chains" value="v=1-136"/>
</dbReference>
<dbReference type="PDB" id="8URH">
    <property type="method" value="EM"/>
    <property type="resolution" value="5.70 A"/>
    <property type="chains" value="v=1-136"/>
</dbReference>
<dbReference type="PDB" id="8URI">
    <property type="method" value="EM"/>
    <property type="resolution" value="5.30 A"/>
    <property type="chains" value="v=1-136"/>
</dbReference>
<dbReference type="PDB" id="8URX">
    <property type="method" value="EM"/>
    <property type="resolution" value="6.60 A"/>
    <property type="chains" value="v=1-136"/>
</dbReference>
<dbReference type="PDB" id="8URY">
    <property type="method" value="EM"/>
    <property type="resolution" value="3.10 A"/>
    <property type="chains" value="v=1-136"/>
</dbReference>
<dbReference type="PDB" id="8VS9">
    <property type="method" value="EM"/>
    <property type="resolution" value="3.90 A"/>
    <property type="chains" value="L16=1-136"/>
</dbReference>
<dbReference type="PDB" id="8VSA">
    <property type="method" value="EM"/>
    <property type="resolution" value="3.70 A"/>
    <property type="chains" value="L16=1-136"/>
</dbReference>
<dbReference type="PDB" id="8W51">
    <property type="method" value="EM"/>
    <property type="resolution" value="2.40 A"/>
    <property type="chains" value="N=1-136"/>
</dbReference>
<dbReference type="PDB" id="8YUO">
    <property type="method" value="EM"/>
    <property type="resolution" value="2.25 A"/>
    <property type="chains" value="l=1-136"/>
</dbReference>
<dbReference type="PDB" id="8YUP">
    <property type="method" value="EM"/>
    <property type="resolution" value="2.39 A"/>
    <property type="chains" value="l=1-136"/>
</dbReference>
<dbReference type="PDB" id="8YUQ">
    <property type="method" value="EM"/>
    <property type="resolution" value="2.41 A"/>
    <property type="chains" value="l=1-136"/>
</dbReference>
<dbReference type="PDB" id="8YUR">
    <property type="method" value="EM"/>
    <property type="resolution" value="2.47 A"/>
    <property type="chains" value="l=1-136"/>
</dbReference>
<dbReference type="PDB" id="9AX7">
    <property type="method" value="EM"/>
    <property type="resolution" value="2.63 A"/>
    <property type="chains" value="l=1-136"/>
</dbReference>
<dbReference type="PDB" id="9AX8">
    <property type="method" value="EM"/>
    <property type="resolution" value="2.60 A"/>
    <property type="chains" value="M=1-136"/>
</dbReference>
<dbReference type="PDB" id="9CG5">
    <property type="method" value="EM"/>
    <property type="resolution" value="2.59 A"/>
    <property type="chains" value="l=1-136"/>
</dbReference>
<dbReference type="PDB" id="9CG6">
    <property type="method" value="EM"/>
    <property type="resolution" value="2.61 A"/>
    <property type="chains" value="l=1-136"/>
</dbReference>
<dbReference type="PDB" id="9CG7">
    <property type="method" value="EM"/>
    <property type="resolution" value="2.75 A"/>
    <property type="chains" value="l=1-136"/>
</dbReference>
<dbReference type="PDB" id="9D89">
    <property type="method" value="EM"/>
    <property type="resolution" value="1.95 A"/>
    <property type="chains" value="l=1-136"/>
</dbReference>
<dbReference type="PDB" id="9FBV">
    <property type="method" value="EM"/>
    <property type="resolution" value="2.40 A"/>
    <property type="chains" value="l=1-136"/>
</dbReference>
<dbReference type="PDB" id="9GFT">
    <property type="method" value="EM"/>
    <property type="resolution" value="3.10 A"/>
    <property type="chains" value="Ah/Z=1-136"/>
</dbReference>
<dbReference type="PDB" id="9GGR">
    <property type="method" value="EM"/>
    <property type="resolution" value="3.20 A"/>
    <property type="chains" value="Ah/Z=1-136"/>
</dbReference>
<dbReference type="PDB" id="9H3Z">
    <property type="method" value="EM"/>
    <property type="resolution" value="2.98 A"/>
    <property type="chains" value="M=1-136"/>
</dbReference>
<dbReference type="PDB" id="9HA6">
    <property type="method" value="EM"/>
    <property type="resolution" value="3.08 A"/>
    <property type="chains" value="M=1-136"/>
</dbReference>
<dbReference type="PDB" id="9MOR">
    <property type="method" value="EM"/>
    <property type="resolution" value="2.65 A"/>
    <property type="chains" value="M=1-136"/>
</dbReference>
<dbReference type="PDB" id="9MQ4">
    <property type="method" value="EM"/>
    <property type="resolution" value="2.78 A"/>
    <property type="chains" value="M=1-136"/>
</dbReference>
<dbReference type="PDBsum" id="2J28"/>
<dbReference type="PDBsum" id="2RDO"/>
<dbReference type="PDBsum" id="3BBX"/>
<dbReference type="PDBsum" id="3J5L"/>
<dbReference type="PDBsum" id="3J7Z"/>
<dbReference type="PDBsum" id="3J8G"/>
<dbReference type="PDBsum" id="3J9Y"/>
<dbReference type="PDBsum" id="3J9Z"/>
<dbReference type="PDBsum" id="3JA1"/>
<dbReference type="PDBsum" id="3JBU"/>
<dbReference type="PDBsum" id="3JBV"/>
<dbReference type="PDBsum" id="3JCD"/>
<dbReference type="PDBsum" id="3JCE"/>
<dbReference type="PDBsum" id="3JCJ"/>
<dbReference type="PDBsum" id="3JCN"/>
<dbReference type="PDBsum" id="4CSU"/>
<dbReference type="PDBsum" id="4U1U"/>
<dbReference type="PDBsum" id="4U1V"/>
<dbReference type="PDBsum" id="4U20"/>
<dbReference type="PDBsum" id="4U24"/>
<dbReference type="PDBsum" id="4U25"/>
<dbReference type="PDBsum" id="4U26"/>
<dbReference type="PDBsum" id="4U27"/>
<dbReference type="PDBsum" id="4UY8"/>
<dbReference type="PDBsum" id="4V47"/>
<dbReference type="PDBsum" id="4V48"/>
<dbReference type="PDBsum" id="4V4H"/>
<dbReference type="PDBsum" id="4V4Q"/>
<dbReference type="PDBsum" id="4V4V"/>
<dbReference type="PDBsum" id="4V4W"/>
<dbReference type="PDBsum" id="4V50"/>
<dbReference type="PDBsum" id="4V52"/>
<dbReference type="PDBsum" id="4V53"/>
<dbReference type="PDBsum" id="4V54"/>
<dbReference type="PDBsum" id="4V55"/>
<dbReference type="PDBsum" id="4V56"/>
<dbReference type="PDBsum" id="4V57"/>
<dbReference type="PDBsum" id="4V5B"/>
<dbReference type="PDBsum" id="4V5H"/>
<dbReference type="PDBsum" id="4V5Y"/>
<dbReference type="PDBsum" id="4V64"/>
<dbReference type="PDBsum" id="4V65"/>
<dbReference type="PDBsum" id="4V66"/>
<dbReference type="PDBsum" id="4V69"/>
<dbReference type="PDBsum" id="4V6C"/>
<dbReference type="PDBsum" id="4V6D"/>
<dbReference type="PDBsum" id="4V6E"/>
<dbReference type="PDBsum" id="4V6K"/>
<dbReference type="PDBsum" id="4V6L"/>
<dbReference type="PDBsum" id="4V6M"/>
<dbReference type="PDBsum" id="4V6N"/>
<dbReference type="PDBsum" id="4V6O"/>
<dbReference type="PDBsum" id="4V6P"/>
<dbReference type="PDBsum" id="4V6Q"/>
<dbReference type="PDBsum" id="4V6R"/>
<dbReference type="PDBsum" id="4V6S"/>
<dbReference type="PDBsum" id="4V6T"/>
<dbReference type="PDBsum" id="4V6V"/>
<dbReference type="PDBsum" id="4V6Y"/>
<dbReference type="PDBsum" id="4V6Z"/>
<dbReference type="PDBsum" id="4V70"/>
<dbReference type="PDBsum" id="4V71"/>
<dbReference type="PDBsum" id="4V72"/>
<dbReference type="PDBsum" id="4V73"/>
<dbReference type="PDBsum" id="4V74"/>
<dbReference type="PDBsum" id="4V75"/>
<dbReference type="PDBsum" id="4V76"/>
<dbReference type="PDBsum" id="4V77"/>
<dbReference type="PDBsum" id="4V78"/>
<dbReference type="PDBsum" id="4V79"/>
<dbReference type="PDBsum" id="4V7A"/>
<dbReference type="PDBsum" id="4V7B"/>
<dbReference type="PDBsum" id="4V7C"/>
<dbReference type="PDBsum" id="4V7D"/>
<dbReference type="PDBsum" id="4V7I"/>
<dbReference type="PDBsum" id="4V7S"/>
<dbReference type="PDBsum" id="4V7T"/>
<dbReference type="PDBsum" id="4V7U"/>
<dbReference type="PDBsum" id="4V7V"/>
<dbReference type="PDBsum" id="4V85"/>
<dbReference type="PDBsum" id="4V89"/>
<dbReference type="PDBsum" id="4V9C"/>
<dbReference type="PDBsum" id="4V9D"/>
<dbReference type="PDBsum" id="4V9O"/>
<dbReference type="PDBsum" id="4V9P"/>
<dbReference type="PDBsum" id="4WF1"/>
<dbReference type="PDBsum" id="4WOI"/>
<dbReference type="PDBsum" id="4WWW"/>
<dbReference type="PDBsum" id="4YBB"/>
<dbReference type="PDBsum" id="5ADY"/>
<dbReference type="PDBsum" id="5AFI"/>
<dbReference type="PDBsum" id="5AKA"/>
<dbReference type="PDBsum" id="5GAD"/>
<dbReference type="PDBsum" id="5GAE"/>
<dbReference type="PDBsum" id="5GAF"/>
<dbReference type="PDBsum" id="5GAG"/>
<dbReference type="PDBsum" id="5GAH"/>
<dbReference type="PDBsum" id="5H5U"/>
<dbReference type="PDBsum" id="5IQR"/>
<dbReference type="PDBsum" id="5IT8"/>
<dbReference type="PDBsum" id="5J5B"/>
<dbReference type="PDBsum" id="5J7L"/>
<dbReference type="PDBsum" id="5J88"/>
<dbReference type="PDBsum" id="5J8A"/>
<dbReference type="PDBsum" id="5J91"/>
<dbReference type="PDBsum" id="5JC9"/>
<dbReference type="PDBsum" id="5JTE"/>
<dbReference type="PDBsum" id="5JU8"/>
<dbReference type="PDBsum" id="5KCR"/>
<dbReference type="PDBsum" id="5KCS"/>
<dbReference type="PDBsum" id="5KPS"/>
<dbReference type="PDBsum" id="5KPV"/>
<dbReference type="PDBsum" id="5KPW"/>
<dbReference type="PDBsum" id="5KPX"/>
<dbReference type="PDBsum" id="5L3P"/>
<dbReference type="PDBsum" id="5LZA"/>
<dbReference type="PDBsum" id="5LZB"/>
<dbReference type="PDBsum" id="5LZC"/>
<dbReference type="PDBsum" id="5LZD"/>
<dbReference type="PDBsum" id="5LZE"/>
<dbReference type="PDBsum" id="5LZF"/>
<dbReference type="PDBsum" id="5MDV"/>
<dbReference type="PDBsum" id="5MDW"/>
<dbReference type="PDBsum" id="5MDY"/>
<dbReference type="PDBsum" id="5MDZ"/>
<dbReference type="PDBsum" id="5MGP"/>
<dbReference type="PDBsum" id="5NCO"/>
<dbReference type="PDBsum" id="5NP6"/>
<dbReference type="PDBsum" id="5NWY"/>
<dbReference type="PDBsum" id="5O2R"/>
<dbReference type="PDBsum" id="5U4I"/>
<dbReference type="PDBsum" id="5U9F"/>
<dbReference type="PDBsum" id="5U9G"/>
<dbReference type="PDBsum" id="5UYK"/>
<dbReference type="PDBsum" id="5UYL"/>
<dbReference type="PDBsum" id="5UYM"/>
<dbReference type="PDBsum" id="5UYN"/>
<dbReference type="PDBsum" id="5UYP"/>
<dbReference type="PDBsum" id="5UYQ"/>
<dbReference type="PDBsum" id="5WDT"/>
<dbReference type="PDBsum" id="5WE4"/>
<dbReference type="PDBsum" id="5WE6"/>
<dbReference type="PDBsum" id="5WF0"/>
<dbReference type="PDBsum" id="5WFK"/>
<dbReference type="PDBsum" id="5WFS"/>
<dbReference type="PDBsum" id="6BU8"/>
<dbReference type="PDBsum" id="6BY1"/>
<dbReference type="PDBsum" id="6C4H"/>
<dbReference type="PDBsum" id="6C4I"/>
<dbReference type="PDBsum" id="6DNC"/>
<dbReference type="PDBsum" id="6ENF"/>
<dbReference type="PDBsum" id="6ENJ"/>
<dbReference type="PDBsum" id="6ENU"/>
<dbReference type="PDBsum" id="6GBZ"/>
<dbReference type="PDBsum" id="6GC8"/>
<dbReference type="PDBsum" id="6GWT"/>
<dbReference type="PDBsum" id="6GXM"/>
<dbReference type="PDBsum" id="6GXN"/>
<dbReference type="PDBsum" id="6GXO"/>
<dbReference type="PDBsum" id="6GXP"/>
<dbReference type="PDBsum" id="6H4N"/>
<dbReference type="PDBsum" id="6H58"/>
<dbReference type="PDBsum" id="6HRM"/>
<dbReference type="PDBsum" id="6I0Y"/>
<dbReference type="PDBsum" id="6I7V"/>
<dbReference type="PDBsum" id="6O9J"/>
<dbReference type="PDBsum" id="6O9K"/>
<dbReference type="PDBsum" id="6OFX"/>
<dbReference type="PDBsum" id="6OG7"/>
<dbReference type="PDBsum" id="6OGF"/>
<dbReference type="PDBsum" id="6OGG"/>
<dbReference type="PDBsum" id="6OGI"/>
<dbReference type="PDBsum" id="6OM6"/>
<dbReference type="PDBsum" id="6ORE"/>
<dbReference type="PDBsum" id="6ORL"/>
<dbReference type="PDBsum" id="6OSK"/>
<dbReference type="PDBsum" id="6OSQ"/>
<dbReference type="PDBsum" id="6OST"/>
<dbReference type="PDBsum" id="6OT3"/>
<dbReference type="PDBsum" id="6OUO"/>
<dbReference type="PDBsum" id="6PJ6"/>
<dbReference type="PDBsum" id="6Q97"/>
<dbReference type="PDBsum" id="6Q98"/>
<dbReference type="PDBsum" id="6Q9A"/>
<dbReference type="PDBsum" id="6QDW"/>
<dbReference type="PDBsum" id="6QUL"/>
<dbReference type="PDBsum" id="6S0K"/>
<dbReference type="PDBsum" id="6SZS"/>
<dbReference type="PDBsum" id="6TBV"/>
<dbReference type="PDBsum" id="6TC3"/>
<dbReference type="PDBsum" id="6U48"/>
<dbReference type="PDBsum" id="6VU3"/>
<dbReference type="PDBsum" id="6VWL"/>
<dbReference type="PDBsum" id="6VWM"/>
<dbReference type="PDBsum" id="6VWN"/>
<dbReference type="PDBsum" id="6VYQ"/>
<dbReference type="PDBsum" id="6VYR"/>
<dbReference type="PDBsum" id="6VYS"/>
<dbReference type="PDBsum" id="6VYT"/>
<dbReference type="PDBsum" id="6VYU"/>
<dbReference type="PDBsum" id="6VYW"/>
<dbReference type="PDBsum" id="6VYX"/>
<dbReference type="PDBsum" id="6VYY"/>
<dbReference type="PDBsum" id="6VYZ"/>
<dbReference type="PDBsum" id="6VZ2"/>
<dbReference type="PDBsum" id="6VZ3"/>
<dbReference type="PDBsum" id="6VZ5"/>
<dbReference type="PDBsum" id="6VZ7"/>
<dbReference type="PDBsum" id="6VZJ"/>
<dbReference type="PDBsum" id="6WD0"/>
<dbReference type="PDBsum" id="6WD1"/>
<dbReference type="PDBsum" id="6WD2"/>
<dbReference type="PDBsum" id="6WD3"/>
<dbReference type="PDBsum" id="6WD4"/>
<dbReference type="PDBsum" id="6WD5"/>
<dbReference type="PDBsum" id="6WD6"/>
<dbReference type="PDBsum" id="6WD7"/>
<dbReference type="PDBsum" id="6WD8"/>
<dbReference type="PDBsum" id="6WD9"/>
<dbReference type="PDBsum" id="6WDA"/>
<dbReference type="PDBsum" id="6WDB"/>
<dbReference type="PDBsum" id="6WDC"/>
<dbReference type="PDBsum" id="6WDD"/>
<dbReference type="PDBsum" id="6WDE"/>
<dbReference type="PDBsum" id="6WDF"/>
<dbReference type="PDBsum" id="6WDG"/>
<dbReference type="PDBsum" id="6WDH"/>
<dbReference type="PDBsum" id="6WDI"/>
<dbReference type="PDBsum" id="6WDJ"/>
<dbReference type="PDBsum" id="6WDK"/>
<dbReference type="PDBsum" id="6WDL"/>
<dbReference type="PDBsum" id="6WDM"/>
<dbReference type="PDBsum" id="6WNW"/>
<dbReference type="PDBsum" id="6X6T"/>
<dbReference type="PDBsum" id="6X7F"/>
<dbReference type="PDBsum" id="6X7K"/>
<dbReference type="PDBsum" id="6X9Q"/>
<dbReference type="PDBsum" id="6XDQ"/>
<dbReference type="PDBsum" id="6XDR"/>
<dbReference type="PDBsum" id="6XGF"/>
<dbReference type="PDBsum" id="6XII"/>
<dbReference type="PDBsum" id="6XIJ"/>
<dbReference type="PDBsum" id="6XZ7"/>
<dbReference type="PDBsum" id="6XZA"/>
<dbReference type="PDBsum" id="6XZB"/>
<dbReference type="PDBsum" id="6Y69"/>
<dbReference type="PDBsum" id="6YSR"/>
<dbReference type="PDBsum" id="6YSS"/>
<dbReference type="PDBsum" id="6YST"/>
<dbReference type="PDBsum" id="6YSU"/>
<dbReference type="PDBsum" id="6ZTJ"/>
<dbReference type="PDBsum" id="6ZTL"/>
<dbReference type="PDBsum" id="6ZTM"/>
<dbReference type="PDBsum" id="6ZTN"/>
<dbReference type="PDBsum" id="6ZTO"/>
<dbReference type="PDBsum" id="6ZTP"/>
<dbReference type="PDBsum" id="6ZU1"/>
<dbReference type="PDBsum" id="7ABZ"/>
<dbReference type="PDBsum" id="7AC7"/>
<dbReference type="PDBsum" id="7ACJ"/>
<dbReference type="PDBsum" id="7ACR"/>
<dbReference type="PDBsum" id="7B5K"/>
<dbReference type="PDBsum" id="7BL4"/>
<dbReference type="PDBsum" id="7BL5"/>
<dbReference type="PDBsum" id="7BL6"/>
<dbReference type="PDBsum" id="7BV8"/>
<dbReference type="PDBsum" id="7D6Z"/>
<dbReference type="PDBsum" id="7D80"/>
<dbReference type="PDBsum" id="7JSS"/>
<dbReference type="PDBsum" id="7JSW"/>
<dbReference type="PDBsum" id="7JSZ"/>
<dbReference type="PDBsum" id="7JT1"/>
<dbReference type="PDBsum" id="7JT2"/>
<dbReference type="PDBsum" id="7JT3"/>
<dbReference type="PDBsum" id="7K00"/>
<dbReference type="PDBsum" id="7K50"/>
<dbReference type="PDBsum" id="7K51"/>
<dbReference type="PDBsum" id="7K52"/>
<dbReference type="PDBsum" id="7K53"/>
<dbReference type="PDBsum" id="7K54"/>
<dbReference type="PDBsum" id="7K55"/>
<dbReference type="PDBsum" id="7LV0"/>
<dbReference type="PDBsum" id="7LVK"/>
<dbReference type="PDBsum" id="7M5D"/>
<dbReference type="PDBsum" id="7N1P"/>
<dbReference type="PDBsum" id="7N2C"/>
<dbReference type="PDBsum" id="7N2U"/>
<dbReference type="PDBsum" id="7N2V"/>
<dbReference type="PDBsum" id="7N30"/>
<dbReference type="PDBsum" id="7N31"/>
<dbReference type="PDBsum" id="7NBU"/>
<dbReference type="PDBsum" id="7NSO"/>
<dbReference type="PDBsum" id="7NSP"/>
<dbReference type="PDBsum" id="7NSQ"/>
<dbReference type="PDBsum" id="7NWT"/>
<dbReference type="PDBsum" id="7NWW"/>
<dbReference type="PDBsum" id="7O19"/>
<dbReference type="PDBsum" id="7O1A"/>
<dbReference type="PDBsum" id="7O1C"/>
<dbReference type="PDBsum" id="7OIF"/>
<dbReference type="PDBsum" id="7OIG"/>
<dbReference type="PDBsum" id="7OII"/>
<dbReference type="PDBsum" id="7OIZ"/>
<dbReference type="PDBsum" id="7OJ0"/>
<dbReference type="PDBsum" id="7OT5"/>
<dbReference type="PDBsum" id="7P3K"/>
<dbReference type="PDBsum" id="7PJS"/>
<dbReference type="PDBsum" id="7PJT"/>
<dbReference type="PDBsum" id="7PJU"/>
<dbReference type="PDBsum" id="7PJV"/>
<dbReference type="PDBsum" id="7PJW"/>
<dbReference type="PDBsum" id="7PJX"/>
<dbReference type="PDBsum" id="7PJY"/>
<dbReference type="PDBsum" id="7PJZ"/>
<dbReference type="PDBsum" id="7Q4K"/>
<dbReference type="PDBsum" id="7QG8"/>
<dbReference type="PDBsum" id="7QGN"/>
<dbReference type="PDBsum" id="7QGR"/>
<dbReference type="PDBsum" id="7QQ3"/>
<dbReference type="PDBsum" id="7S1G"/>
<dbReference type="PDBsum" id="7S1H"/>
<dbReference type="PDBsum" id="7S1I"/>
<dbReference type="PDBsum" id="7S1J"/>
<dbReference type="PDBsum" id="7S1K"/>
<dbReference type="PDBsum" id="7SA4"/>
<dbReference type="PDBsum" id="7SS9"/>
<dbReference type="PDBsum" id="7SSD"/>
<dbReference type="PDBsum" id="7SSL"/>
<dbReference type="PDBsum" id="7SSN"/>
<dbReference type="PDBsum" id="7SSO"/>
<dbReference type="PDBsum" id="7SSW"/>
<dbReference type="PDBsum" id="7ST2"/>
<dbReference type="PDBsum" id="7ST6"/>
<dbReference type="PDBsum" id="7ST7"/>
<dbReference type="PDBsum" id="7TOS"/>
<dbReference type="PDBsum" id="7UG7"/>
<dbReference type="PDBsum" id="7UPH"/>
<dbReference type="PDBsum" id="7Y7C"/>
<dbReference type="PDBsum" id="7Y7D"/>
<dbReference type="PDBsum" id="7Y7E"/>
<dbReference type="PDBsum" id="7Y7F"/>
<dbReference type="PDBsum" id="7Y7G"/>
<dbReference type="PDBsum" id="7Y7H"/>
<dbReference type="PDBsum" id="7YLA"/>
<dbReference type="PDBsum" id="7Z20"/>
<dbReference type="PDBsum" id="7ZOD"/>
<dbReference type="PDBsum" id="7ZP8"/>
<dbReference type="PDBsum" id="7ZQ5"/>
<dbReference type="PDBsum" id="7ZQ6"/>
<dbReference type="PDBsum" id="7ZTA"/>
<dbReference type="PDBsum" id="8A3L"/>
<dbReference type="PDBsum" id="8AKN"/>
<dbReference type="PDBsum" id="8AM9"/>
<dbReference type="PDBsum" id="8ANA"/>
<dbReference type="PDBsum" id="8AP4"/>
<dbReference type="PDBsum" id="8AYE"/>
<dbReference type="PDBsum" id="8B0X"/>
<dbReference type="PDBsum" id="8B7Y"/>
<dbReference type="PDBsum" id="8BF7"/>
<dbReference type="PDBsum" id="8BGE"/>
<dbReference type="PDBsum" id="8BGH"/>
<dbReference type="PDBsum" id="8BH4"/>
<dbReference type="PDBsum" id="8BHJ"/>
<dbReference type="PDBsum" id="8BHL"/>
<dbReference type="PDBsum" id="8BHN"/>
<dbReference type="PDBsum" id="8BHP"/>
<dbReference type="PDBsum" id="8BIL"/>
<dbReference type="PDBsum" id="8BIM"/>
<dbReference type="PDBsum" id="8C8X"/>
<dbReference type="PDBsum" id="8CAM"/>
<dbReference type="PDBsum" id="8CEU"/>
<dbReference type="PDBsum" id="8CGD"/>
<dbReference type="PDBsum" id="8CGK"/>
<dbReference type="PDBsum" id="8CGV"/>
<dbReference type="PDBsum" id="8EIU"/>
<dbReference type="PDBsum" id="8EKC"/>
<dbReference type="PDBsum" id="8EMM"/>
<dbReference type="PDBsum" id="8FIZ"/>
<dbReference type="PDBsum" id="8FTO"/>
<dbReference type="PDBsum" id="8FZD"/>
<dbReference type="PDBsum" id="8FZE"/>
<dbReference type="PDBsum" id="8FZF"/>
<dbReference type="PDBsum" id="8FZG"/>
<dbReference type="PDBsum" id="8FZH"/>
<dbReference type="PDBsum" id="8FZI"/>
<dbReference type="PDBsum" id="8FZJ"/>
<dbReference type="PDBsum" id="8G2U"/>
<dbReference type="PDBsum" id="8G31"/>
<dbReference type="PDBsum" id="8G34"/>
<dbReference type="PDBsum" id="8G38"/>
<dbReference type="PDBsum" id="8G6W"/>
<dbReference type="PDBsum" id="8G6X"/>
<dbReference type="PDBsum" id="8G6Y"/>
<dbReference type="PDBsum" id="8G7P"/>
<dbReference type="PDBsum" id="8G7Q"/>
<dbReference type="PDBsum" id="8G7R"/>
<dbReference type="PDBsum" id="8G7S"/>
<dbReference type="PDBsum" id="8HSP"/>
<dbReference type="PDBsum" id="8HTZ"/>
<dbReference type="PDBsum" id="8HU1"/>
<dbReference type="PDBsum" id="8IFB"/>
<dbReference type="PDBsum" id="8IFC"/>
<dbReference type="PDBsum" id="8P16"/>
<dbReference type="PDBsum" id="8P17"/>
<dbReference type="PDBsum" id="8P18"/>
<dbReference type="PDBsum" id="8PEG"/>
<dbReference type="PDBsum" id="8PHJ"/>
<dbReference type="PDBsum" id="8PKL"/>
<dbReference type="PDBsum" id="8PVA"/>
<dbReference type="PDBsum" id="8Q4F"/>
<dbReference type="PDBsum" id="8QBT"/>
<dbReference type="PDBsum" id="8QK7"/>
<dbReference type="PDBsum" id="8QOA"/>
<dbReference type="PDBsum" id="8R3V"/>
<dbReference type="PDBsum" id="8R6C"/>
<dbReference type="PDBsum" id="8R8M"/>
<dbReference type="PDBsum" id="8RCL"/>
<dbReference type="PDBsum" id="8RCM"/>
<dbReference type="PDBsum" id="8RCS"/>
<dbReference type="PDBsum" id="8RCT"/>
<dbReference type="PDBsum" id="8RPY"/>
<dbReference type="PDBsum" id="8RPZ"/>
<dbReference type="PDBsum" id="8RQ0"/>
<dbReference type="PDBsum" id="8RQ2"/>
<dbReference type="PDBsum" id="8SYL"/>
<dbReference type="PDBsum" id="8T5D"/>
<dbReference type="PDBsum" id="8T5H"/>
<dbReference type="PDBsum" id="8UPO"/>
<dbReference type="PDBsum" id="8UPR"/>
<dbReference type="PDBsum" id="8UQL"/>
<dbReference type="PDBsum" id="8UQM"/>
<dbReference type="PDBsum" id="8UQP"/>
<dbReference type="PDBsum" id="8UR0"/>
<dbReference type="PDBsum" id="8URH"/>
<dbReference type="PDBsum" id="8URI"/>
<dbReference type="PDBsum" id="8URX"/>
<dbReference type="PDBsum" id="8URY"/>
<dbReference type="PDBsum" id="8VS9"/>
<dbReference type="PDBsum" id="8VSA"/>
<dbReference type="PDBsum" id="8W51"/>
<dbReference type="PDBsum" id="8YUO"/>
<dbReference type="PDBsum" id="8YUP"/>
<dbReference type="PDBsum" id="8YUQ"/>
<dbReference type="PDBsum" id="8YUR"/>
<dbReference type="PDBsum" id="9AX7"/>
<dbReference type="PDBsum" id="9AX8"/>
<dbReference type="PDBsum" id="9CG5"/>
<dbReference type="PDBsum" id="9CG6"/>
<dbReference type="PDBsum" id="9CG7"/>
<dbReference type="PDBsum" id="9D89"/>
<dbReference type="PDBsum" id="9FBV"/>
<dbReference type="PDBsum" id="9GFT"/>
<dbReference type="PDBsum" id="9GGR"/>
<dbReference type="PDBsum" id="9H3Z"/>
<dbReference type="PDBsum" id="9HA6"/>
<dbReference type="PDBsum" id="9MOR"/>
<dbReference type="PDBsum" id="9MQ4"/>
<dbReference type="EMDB" id="EMD-0076"/>
<dbReference type="EMDB" id="EMD-0080"/>
<dbReference type="EMDB" id="EMD-0081"/>
<dbReference type="EMDB" id="EMD-0082"/>
<dbReference type="EMDB" id="EMD-0083"/>
<dbReference type="EMDB" id="EMD-0137"/>
<dbReference type="EMDB" id="EMD-0139"/>
<dbReference type="EMDB" id="EMD-0261"/>
<dbReference type="EMDB" id="EMD-0322"/>
<dbReference type="EMDB" id="EMD-0661"/>
<dbReference type="EMDB" id="EMD-0662"/>
<dbReference type="EMDB" id="EMD-10073"/>
<dbReference type="EMDB" id="EMD-10353"/>
<dbReference type="EMDB" id="EMD-10453"/>
<dbReference type="EMDB" id="EMD-10458"/>
<dbReference type="EMDB" id="EMD-10655"/>
<dbReference type="EMDB" id="EMD-10656"/>
<dbReference type="EMDB" id="EMD-10657"/>
<dbReference type="EMDB" id="EMD-10705"/>
<dbReference type="EMDB" id="EMD-10905"/>
<dbReference type="EMDB" id="EMD-10906"/>
<dbReference type="EMDB" id="EMD-10907"/>
<dbReference type="EMDB" id="EMD-10908"/>
<dbReference type="EMDB" id="EMD-11418"/>
<dbReference type="EMDB" id="EMD-11419"/>
<dbReference type="EMDB" id="EMD-11420"/>
<dbReference type="EMDB" id="EMD-11421"/>
<dbReference type="EMDB" id="EMD-11422"/>
<dbReference type="EMDB" id="EMD-11423"/>
<dbReference type="EMDB" id="EMD-11426"/>
<dbReference type="EMDB" id="EMD-11710"/>
<dbReference type="EMDB" id="EMD-11713"/>
<dbReference type="EMDB" id="EMD-11717"/>
<dbReference type="EMDB" id="EMD-11718"/>
<dbReference type="EMDB" id="EMD-12035"/>
<dbReference type="EMDB" id="EMD-12217"/>
<dbReference type="EMDB" id="EMD-12218"/>
<dbReference type="EMDB" id="EMD-12219"/>
<dbReference type="EMDB" id="EMD-12573"/>
<dbReference type="EMDB" id="EMD-12574"/>
<dbReference type="EMDB" id="EMD-12575"/>
<dbReference type="EMDB" id="EMD-12635"/>
<dbReference type="EMDB" id="EMD-12636"/>
<dbReference type="EMDB" id="EMD-12693"/>
<dbReference type="EMDB" id="EMD-12694"/>
<dbReference type="EMDB" id="EMD-12695"/>
<dbReference type="EMDB" id="EMD-12928"/>
<dbReference type="EMDB" id="EMD-12929"/>
<dbReference type="EMDB" id="EMD-12930"/>
<dbReference type="EMDB" id="EMD-12936"/>
<dbReference type="EMDB" id="EMD-12937"/>
<dbReference type="EMDB" id="EMD-13055"/>
<dbReference type="EMDB" id="EMD-13180"/>
<dbReference type="EMDB" id="EMD-13458"/>
<dbReference type="EMDB" id="EMD-13459"/>
<dbReference type="EMDB" id="EMD-13461"/>
<dbReference type="EMDB" id="EMD-13462"/>
<dbReference type="EMDB" id="EMD-13463"/>
<dbReference type="EMDB" id="EMD-13464"/>
<dbReference type="EMDB" id="EMD-13465"/>
<dbReference type="EMDB" id="EMD-13805"/>
<dbReference type="EMDB" id="EMD-13952"/>
<dbReference type="EMDB" id="EMD-13956"/>
<dbReference type="EMDB" id="EMD-13958"/>
<dbReference type="EMDB" id="EMD-14121"/>
<dbReference type="EMDB" id="EMD-14956"/>
<dbReference type="EMDB" id="EMD-15116"/>
<dbReference type="EMDB" id="EMD-15558"/>
<dbReference type="EMDB" id="EMD-15712"/>
<dbReference type="EMDB" id="EMD-15793"/>
<dbReference type="EMDB" id="EMD-15905"/>
<dbReference type="EMDB" id="EMD-16015"/>
<dbReference type="EMDB" id="EMD-16029"/>
<dbReference type="EMDB" id="EMD-16031"/>
<dbReference type="EMDB" id="EMD-16047"/>
<dbReference type="EMDB" id="EMD-16057"/>
<dbReference type="EMDB" id="EMD-16059"/>
<dbReference type="EMDB" id="EMD-16062"/>
<dbReference type="EMDB" id="EMD-16065"/>
<dbReference type="EMDB" id="EMD-16081"/>
<dbReference type="EMDB" id="EMD-16082"/>
<dbReference type="EMDB" id="EMD-16494"/>
<dbReference type="EMDB" id="EMD-16530"/>
<dbReference type="EMDB" id="EMD-16613"/>
<dbReference type="EMDB" id="EMD-16641"/>
<dbReference type="EMDB" id="EMD-16646"/>
<dbReference type="EMDB" id="EMD-16652"/>
<dbReference type="EMDB" id="EMD-17346"/>
<dbReference type="EMDB" id="EMD-17347"/>
<dbReference type="EMDB" id="EMD-17348"/>
<dbReference type="EMDB" id="EMD-17631"/>
<dbReference type="EMDB" id="EMD-17667"/>
<dbReference type="EMDB" id="EMD-17743"/>
<dbReference type="EMDB" id="EMD-17959"/>
<dbReference type="EMDB" id="EMD-18145"/>
<dbReference type="EMDB" id="EMD-18458"/>
<dbReference type="EMDB" id="EMD-18534"/>
<dbReference type="EMDB" id="EMD-18875"/>
<dbReference type="EMDB" id="EMD-18950"/>
<dbReference type="EMDB" id="EMD-19004"/>
<dbReference type="EMDB" id="EMD-19054"/>
<dbReference type="EMDB" id="EMD-19055"/>
<dbReference type="EMDB" id="EMD-19058"/>
<dbReference type="EMDB" id="EMD-19059"/>
<dbReference type="EMDB" id="EMD-19426"/>
<dbReference type="EMDB" id="EMD-19427"/>
<dbReference type="EMDB" id="EMD-19428"/>
<dbReference type="EMDB" id="EMD-19429"/>
<dbReference type="EMDB" id="EMD-20048"/>
<dbReference type="EMDB" id="EMD-20052"/>
<dbReference type="EMDB" id="EMD-20056"/>
<dbReference type="EMDB" id="EMD-20057"/>
<dbReference type="EMDB" id="EMD-20058"/>
<dbReference type="EMDB" id="EMD-20121"/>
<dbReference type="EMDB" id="EMD-20173"/>
<dbReference type="EMDB" id="EMD-20174"/>
<dbReference type="EMDB" id="EMD-20184"/>
<dbReference type="EMDB" id="EMD-20187"/>
<dbReference type="EMDB" id="EMD-20188"/>
<dbReference type="EMDB" id="EMD-20193"/>
<dbReference type="EMDB" id="EMD-20204"/>
<dbReference type="EMDB" id="EMD-21386"/>
<dbReference type="EMDB" id="EMD-21420"/>
<dbReference type="EMDB" id="EMD-21421"/>
<dbReference type="EMDB" id="EMD-21422"/>
<dbReference type="EMDB" id="EMD-21468"/>
<dbReference type="EMDB" id="EMD-21469"/>
<dbReference type="EMDB" id="EMD-21470"/>
<dbReference type="EMDB" id="EMD-21471"/>
<dbReference type="EMDB" id="EMD-21472"/>
<dbReference type="EMDB" id="EMD-21474"/>
<dbReference type="EMDB" id="EMD-21475"/>
<dbReference type="EMDB" id="EMD-21476"/>
<dbReference type="EMDB" id="EMD-21477"/>
<dbReference type="EMDB" id="EMD-21482"/>
<dbReference type="EMDB" id="EMD-21483"/>
<dbReference type="EMDB" id="EMD-21485"/>
<dbReference type="EMDB" id="EMD-21486"/>
<dbReference type="EMDB" id="EMD-21494"/>
<dbReference type="EMDB" id="EMD-21619"/>
<dbReference type="EMDB" id="EMD-21620"/>
<dbReference type="EMDB" id="EMD-21621"/>
<dbReference type="EMDB" id="EMD-21622"/>
<dbReference type="EMDB" id="EMD-21623"/>
<dbReference type="EMDB" id="EMD-21624"/>
<dbReference type="EMDB" id="EMD-21625"/>
<dbReference type="EMDB" id="EMD-21626"/>
<dbReference type="EMDB" id="EMD-21627"/>
<dbReference type="EMDB" id="EMD-21628"/>
<dbReference type="EMDB" id="EMD-21629"/>
<dbReference type="EMDB" id="EMD-21630"/>
<dbReference type="EMDB" id="EMD-21631"/>
<dbReference type="EMDB" id="EMD-21632"/>
<dbReference type="EMDB" id="EMD-21633"/>
<dbReference type="EMDB" id="EMD-21634"/>
<dbReference type="EMDB" id="EMD-21635"/>
<dbReference type="EMDB" id="EMD-21636"/>
<dbReference type="EMDB" id="EMD-21637"/>
<dbReference type="EMDB" id="EMD-21638"/>
<dbReference type="EMDB" id="EMD-21639"/>
<dbReference type="EMDB" id="EMD-21640"/>
<dbReference type="EMDB" id="EMD-21641"/>
<dbReference type="EMDB" id="EMD-21858"/>
<dbReference type="EMDB" id="EMD-22082"/>
<dbReference type="EMDB" id="EMD-22084"/>
<dbReference type="EMDB" id="EMD-22087"/>
<dbReference type="EMDB" id="EMD-22107"/>
<dbReference type="EMDB" id="EMD-22141"/>
<dbReference type="EMDB" id="EMD-22142"/>
<dbReference type="EMDB" id="EMD-22181"/>
<dbReference type="EMDB" id="EMD-22192"/>
<dbReference type="EMDB" id="EMD-22193"/>
<dbReference type="EMDB" id="EMD-22459"/>
<dbReference type="EMDB" id="EMD-22461"/>
<dbReference type="EMDB" id="EMD-22464"/>
<dbReference type="EMDB" id="EMD-22466"/>
<dbReference type="EMDB" id="EMD-22469"/>
<dbReference type="EMDB" id="EMD-22472"/>
<dbReference type="EMDB" id="EMD-22669"/>
<dbReference type="EMDB" id="EMD-22670"/>
<dbReference type="EMDB" id="EMD-22671"/>
<dbReference type="EMDB" id="EMD-22672"/>
<dbReference type="EMDB" id="EMD-22673"/>
<dbReference type="EMDB" id="EMD-22674"/>
<dbReference type="EMDB" id="EMD-23528"/>
<dbReference type="EMDB" id="EMD-23673"/>
<dbReference type="EMDB" id="EMD-24120"/>
<dbReference type="EMDB" id="EMD-24132"/>
<dbReference type="EMDB" id="EMD-24133"/>
<dbReference type="EMDB" id="EMD-24134"/>
<dbReference type="EMDB" id="EMD-24135"/>
<dbReference type="EMDB" id="EMD-24136"/>
<dbReference type="EMDB" id="EMD-24802"/>
<dbReference type="EMDB" id="EMD-24803"/>
<dbReference type="EMDB" id="EMD-24944"/>
<dbReference type="EMDB" id="EMD-25405"/>
<dbReference type="EMDB" id="EMD-25407"/>
<dbReference type="EMDB" id="EMD-25409"/>
<dbReference type="EMDB" id="EMD-25410"/>
<dbReference type="EMDB" id="EMD-25411"/>
<dbReference type="EMDB" id="EMD-25415"/>
<dbReference type="EMDB" id="EMD-25418"/>
<dbReference type="EMDB" id="EMD-25420"/>
<dbReference type="EMDB" id="EMD-25421"/>
<dbReference type="EMDB" id="EMD-26037"/>
<dbReference type="EMDB" id="EMD-26486"/>
<dbReference type="EMDB" id="EMD-26666"/>
<dbReference type="EMDB" id="EMD-29214"/>
<dbReference type="EMDB" id="EMD-29681"/>
<dbReference type="EMDB" id="EMD-29687"/>
<dbReference type="EMDB" id="EMD-29688"/>
<dbReference type="EMDB" id="EMD-29689"/>
<dbReference type="EMDB" id="EMD-29787"/>
<dbReference type="EMDB" id="EMD-30215"/>
<dbReference type="EMDB" id="EMD-30598"/>
<dbReference type="EMDB" id="EMD-30611"/>
<dbReference type="EMDB" id="EMD-33660"/>
<dbReference type="EMDB" id="EMD-33661"/>
<dbReference type="EMDB" id="EMD-33662"/>
<dbReference type="EMDB" id="EMD-33663"/>
<dbReference type="EMDB" id="EMD-33664"/>
<dbReference type="EMDB" id="EMD-33665"/>
<dbReference type="EMDB" id="EMD-33904"/>
<dbReference type="EMDB" id="EMD-3489"/>
<dbReference type="EMDB" id="EMD-3490"/>
<dbReference type="EMDB" id="EMD-3492"/>
<dbReference type="EMDB" id="EMD-3493"/>
<dbReference type="EMDB" id="EMD-35001"/>
<dbReference type="EMDB" id="EMD-35020"/>
<dbReference type="EMDB" id="EMD-35022"/>
<dbReference type="EMDB" id="EMD-3508"/>
<dbReference type="EMDB" id="EMD-35411"/>
<dbReference type="EMDB" id="EMD-35412"/>
<dbReference type="EMDB" id="EMD-3617"/>
<dbReference type="EMDB" id="EMD-3713"/>
<dbReference type="EMDB" id="EMD-37271"/>
<dbReference type="EMDB" id="EMD-3730"/>
<dbReference type="EMDB" id="EMD-3898"/>
<dbReference type="EMDB" id="EMD-3899"/>
<dbReference type="EMDB" id="EMD-3903"/>
<dbReference type="EMDB" id="EMD-39577"/>
<dbReference type="EMDB" id="EMD-39578"/>
<dbReference type="EMDB" id="EMD-39579"/>
<dbReference type="EMDB" id="EMD-39580"/>
<dbReference type="EMDB" id="EMD-4001"/>
<dbReference type="EMDB" id="EMD-41049"/>
<dbReference type="EMDB" id="EMD-41050"/>
<dbReference type="EMDB" id="EMD-4121"/>
<dbReference type="EMDB" id="EMD-4122"/>
<dbReference type="EMDB" id="EMD-4123"/>
<dbReference type="EMDB" id="EMD-4124"/>
<dbReference type="EMDB" id="EMD-4125"/>
<dbReference type="EMDB" id="EMD-4126"/>
<dbReference type="EMDB" id="EMD-42453"/>
<dbReference type="EMDB" id="EMD-42454"/>
<dbReference type="EMDB" id="EMD-42473"/>
<dbReference type="EMDB" id="EMD-42474"/>
<dbReference type="EMDB" id="EMD-42477"/>
<dbReference type="EMDB" id="EMD-42479"/>
<dbReference type="EMDB" id="EMD-42492"/>
<dbReference type="EMDB" id="EMD-42493"/>
<dbReference type="EMDB" id="EMD-42503"/>
<dbReference type="EMDB" id="EMD-42504"/>
<dbReference type="EMDB" id="EMD-43490"/>
<dbReference type="EMDB" id="EMD-43491"/>
<dbReference type="EMDB" id="EMD-4378"/>
<dbReference type="EMDB" id="EMD-4383"/>
<dbReference type="EMDB" id="EMD-43930"/>
<dbReference type="EMDB" id="EMD-4476"/>
<dbReference type="EMDB" id="EMD-4477"/>
<dbReference type="EMDB" id="EMD-4478"/>
<dbReference type="EMDB" id="EMD-4638"/>
<dbReference type="EMDB" id="EMD-48479"/>
<dbReference type="EMDB" id="EMD-48513"/>
<dbReference type="EMDB" id="EMD-50296"/>
<dbReference type="EMDB" id="EMD-51318"/>
<dbReference type="EMDB" id="EMD-51340"/>
<dbReference type="EMDB" id="EMD-51843"/>
<dbReference type="EMDB" id="EMD-51978"/>
<dbReference type="EMDB" id="EMD-6667"/>
<dbReference type="EMDB" id="EMD-7289"/>
<dbReference type="EMDB" id="EMD-7340"/>
<dbReference type="EMDB" id="EMD-7341"/>
<dbReference type="EMDB" id="EMD-8000"/>
<dbReference type="EMDB" id="EMD-8001"/>
<dbReference type="EMDB" id="EMD-8002"/>
<dbReference type="EMDB" id="EMD-8003"/>
<dbReference type="EMDB" id="EMD-8004"/>
<dbReference type="EMDB" id="EMD-8107"/>
<dbReference type="EMDB" id="EMD-8175"/>
<dbReference type="EMDB" id="EMD-8176"/>
<dbReference type="EMDB" id="EMD-8237"/>
<dbReference type="EMDB" id="EMD-8238"/>
<dbReference type="EMDB" id="EMD-8279"/>
<dbReference type="EMDB" id="EMD-8280"/>
<dbReference type="EMDB" id="EMD-8281"/>
<dbReference type="EMDB" id="EMD-8282"/>
<dbReference type="EMDB" id="EMD-8505"/>
<dbReference type="EMDB" id="EMD-8615"/>
<dbReference type="EMDB" id="EMD-8616"/>
<dbReference type="EMDB" id="EMD-8617"/>
<dbReference type="EMDB" id="EMD-8618"/>
<dbReference type="EMDB" id="EMD-8619"/>
<dbReference type="EMDB" id="EMD-8620"/>
<dbReference type="EMDB" id="EMD-8813"/>
<dbReference type="EMDB" id="EMD-8814"/>
<dbReference type="EMDB" id="EMD-8815"/>
<dbReference type="EMDB" id="EMD-8828"/>
<dbReference type="SMR" id="P0ADY7"/>
<dbReference type="BioGRID" id="4263109">
    <property type="interactions" value="13"/>
</dbReference>
<dbReference type="BioGRID" id="852118">
    <property type="interactions" value="2"/>
</dbReference>
<dbReference type="ComplexPortal" id="CPX-3807">
    <property type="entry name" value="50S large ribosomal subunit"/>
</dbReference>
<dbReference type="DIP" id="DIP-35976N"/>
<dbReference type="FunCoup" id="P0ADY7">
    <property type="interactions" value="946"/>
</dbReference>
<dbReference type="IntAct" id="P0ADY7">
    <property type="interactions" value="57"/>
</dbReference>
<dbReference type="STRING" id="511145.b3313"/>
<dbReference type="DrugBank" id="DB00446">
    <property type="generic name" value="Chloramphenicol"/>
</dbReference>
<dbReference type="iPTMnet" id="P0ADY7"/>
<dbReference type="jPOST" id="P0ADY7"/>
<dbReference type="PaxDb" id="511145-b3313"/>
<dbReference type="EnsemblBacteria" id="AAC76338">
    <property type="protein sequence ID" value="AAC76338"/>
    <property type="gene ID" value="b3313"/>
</dbReference>
<dbReference type="GeneID" id="93778674"/>
<dbReference type="GeneID" id="947806"/>
<dbReference type="KEGG" id="ecj:JW3275"/>
<dbReference type="KEGG" id="eco:b3313"/>
<dbReference type="KEGG" id="ecoc:C3026_18005"/>
<dbReference type="PATRIC" id="fig|1411691.4.peg.3418"/>
<dbReference type="EchoBASE" id="EB0870"/>
<dbReference type="eggNOG" id="COG0197">
    <property type="taxonomic scope" value="Bacteria"/>
</dbReference>
<dbReference type="HOGENOM" id="CLU_078858_2_1_6"/>
<dbReference type="InParanoid" id="P0ADY7"/>
<dbReference type="OMA" id="KGAVEYW"/>
<dbReference type="OrthoDB" id="9802589at2"/>
<dbReference type="PhylomeDB" id="P0ADY7"/>
<dbReference type="BioCyc" id="EcoCyc:EG10877-MONOMER"/>
<dbReference type="BioCyc" id="MetaCyc:EG10877-MONOMER"/>
<dbReference type="EvolutionaryTrace" id="P0ADY7"/>
<dbReference type="PRO" id="PR:P0ADY7"/>
<dbReference type="Proteomes" id="UP000000625">
    <property type="component" value="Chromosome"/>
</dbReference>
<dbReference type="GO" id="GO:0005737">
    <property type="term" value="C:cytoplasm"/>
    <property type="evidence" value="ECO:0000314"/>
    <property type="project" value="ComplexPortal"/>
</dbReference>
<dbReference type="GO" id="GO:0022625">
    <property type="term" value="C:cytosolic large ribosomal subunit"/>
    <property type="evidence" value="ECO:0000314"/>
    <property type="project" value="CAFA"/>
</dbReference>
<dbReference type="GO" id="GO:0019843">
    <property type="term" value="F:rRNA binding"/>
    <property type="evidence" value="ECO:0000314"/>
    <property type="project" value="EcoCyc"/>
</dbReference>
<dbReference type="GO" id="GO:0003735">
    <property type="term" value="F:structural constituent of ribosome"/>
    <property type="evidence" value="ECO:0000314"/>
    <property type="project" value="CAFA"/>
</dbReference>
<dbReference type="GO" id="GO:0000049">
    <property type="term" value="F:tRNA binding"/>
    <property type="evidence" value="ECO:0000314"/>
    <property type="project" value="EcoCyc"/>
</dbReference>
<dbReference type="GO" id="GO:0002181">
    <property type="term" value="P:cytoplasmic translation"/>
    <property type="evidence" value="ECO:0000303"/>
    <property type="project" value="ComplexPortal"/>
</dbReference>
<dbReference type="GO" id="GO:0000027">
    <property type="term" value="P:ribosomal large subunit assembly"/>
    <property type="evidence" value="ECO:0000314"/>
    <property type="project" value="CAFA"/>
</dbReference>
<dbReference type="CDD" id="cd01433">
    <property type="entry name" value="Ribosomal_L16_L10e"/>
    <property type="match status" value="1"/>
</dbReference>
<dbReference type="FunFam" id="3.90.1170.10:FF:000001">
    <property type="entry name" value="50S ribosomal protein L16"/>
    <property type="match status" value="1"/>
</dbReference>
<dbReference type="Gene3D" id="3.90.1170.10">
    <property type="entry name" value="Ribosomal protein L10e/L16"/>
    <property type="match status" value="1"/>
</dbReference>
<dbReference type="HAMAP" id="MF_01342">
    <property type="entry name" value="Ribosomal_uL16"/>
    <property type="match status" value="1"/>
</dbReference>
<dbReference type="InterPro" id="IPR047873">
    <property type="entry name" value="Ribosomal_uL16"/>
</dbReference>
<dbReference type="InterPro" id="IPR000114">
    <property type="entry name" value="Ribosomal_uL16_bact-type"/>
</dbReference>
<dbReference type="InterPro" id="IPR020798">
    <property type="entry name" value="Ribosomal_uL16_CS"/>
</dbReference>
<dbReference type="InterPro" id="IPR016180">
    <property type="entry name" value="Ribosomal_uL16_dom"/>
</dbReference>
<dbReference type="InterPro" id="IPR036920">
    <property type="entry name" value="Ribosomal_uL16_sf"/>
</dbReference>
<dbReference type="NCBIfam" id="TIGR01164">
    <property type="entry name" value="rplP_bact"/>
    <property type="match status" value="1"/>
</dbReference>
<dbReference type="PANTHER" id="PTHR12220">
    <property type="entry name" value="50S/60S RIBOSOMAL PROTEIN L16"/>
    <property type="match status" value="1"/>
</dbReference>
<dbReference type="PANTHER" id="PTHR12220:SF13">
    <property type="entry name" value="LARGE RIBOSOMAL SUBUNIT PROTEIN UL16M"/>
    <property type="match status" value="1"/>
</dbReference>
<dbReference type="Pfam" id="PF00252">
    <property type="entry name" value="Ribosomal_L16"/>
    <property type="match status" value="1"/>
</dbReference>
<dbReference type="PRINTS" id="PR00060">
    <property type="entry name" value="RIBOSOMALL16"/>
</dbReference>
<dbReference type="SUPFAM" id="SSF54686">
    <property type="entry name" value="Ribosomal protein L16p/L10e"/>
    <property type="match status" value="1"/>
</dbReference>
<dbReference type="PROSITE" id="PS00586">
    <property type="entry name" value="RIBOSOMAL_L16_1"/>
    <property type="match status" value="1"/>
</dbReference>
<dbReference type="PROSITE" id="PS00701">
    <property type="entry name" value="RIBOSOMAL_L16_2"/>
    <property type="match status" value="1"/>
</dbReference>
<comment type="function">
    <text evidence="11 12 15">Binds directly to 23S ribosomal RNA and is located at the A site of the peptidyltransferase center. It contacts the A and P site tRNAs (PubMed:8524654). One of the last ribosomal proteins to be assembled in the 50S subunit (PubMed:33639093). The simultaneous presence of uL16 and bL36 probably triggers ObgE's GTPase activity and eventual dissociation from the mature 50S ribosmal subunit (PubMed:33639093). It has an essential role in subunit assembly (PubMed:3298242).</text>
</comment>
<comment type="subunit">
    <text evidence="1 2 3 4 6 7 8 9 10 12 13 14 15">Part of the 50S ribosomal subunit (PubMed:10094780, PubMed:12809609, PubMed:16272117, PubMed:24844575, PubMed:25310980, PubMed:27906160, PubMed:27906161, PubMed:27934701, PubMed:786730, PubMed:33639093, PubMed:38842932). Cross-links to the A and P site tRNAs (PubMed:8524654). Interacts with assembly factor DarP(YjgA) (PubMed:38842932).</text>
</comment>
<comment type="PTM">
    <text evidence="5">Is hydroxylated on Arg-81 by RoxA. The modification is nearly suppressed when E.coli is grown in anoxia.</text>
</comment>
<comment type="mass spectrometry"/>
<comment type="similarity">
    <text evidence="1 17">Belongs to the universal ribosomal protein uL16 family.</text>
</comment>
<keyword id="KW-0002">3D-structure</keyword>
<keyword id="KW-0903">Direct protein sequencing</keyword>
<keyword id="KW-0379">Hydroxylation</keyword>
<keyword id="KW-0488">Methylation</keyword>
<keyword id="KW-1185">Reference proteome</keyword>
<keyword id="KW-0687">Ribonucleoprotein</keyword>
<keyword id="KW-0689">Ribosomal protein</keyword>
<keyword id="KW-0694">RNA-binding</keyword>
<keyword id="KW-0699">rRNA-binding</keyword>
<keyword id="KW-0820">tRNA-binding</keyword>